<feature type="chain" id="PRO_0000235298" description="Obscurin">
    <location>
        <begin position="1"/>
        <end position="7968"/>
    </location>
</feature>
<feature type="domain" description="Ig-like 1">
    <location>
        <begin position="10"/>
        <end position="100"/>
    </location>
</feature>
<feature type="domain" description="Ig-like 2">
    <location>
        <begin position="110"/>
        <end position="202"/>
    </location>
</feature>
<feature type="domain" description="Ig-like 3">
    <location>
        <begin position="236"/>
        <end position="322"/>
    </location>
</feature>
<feature type="domain" description="Ig-like 4">
    <location>
        <begin position="331"/>
        <end position="414"/>
    </location>
</feature>
<feature type="domain" description="Ig-like 5">
    <location>
        <begin position="420"/>
        <end position="508"/>
    </location>
</feature>
<feature type="domain" description="Fibronectin type-III 1" evidence="9">
    <location>
        <begin position="515"/>
        <end position="612"/>
    </location>
</feature>
<feature type="domain" description="Ig-like 6">
    <location>
        <begin position="619"/>
        <end position="698"/>
    </location>
</feature>
<feature type="domain" description="Ig-like 7">
    <location>
        <begin position="701"/>
        <end position="790"/>
    </location>
</feature>
<feature type="domain" description="Ig-like 8">
    <location>
        <begin position="798"/>
        <end position="884"/>
    </location>
</feature>
<feature type="domain" description="Ig-like 9">
    <location>
        <begin position="886"/>
        <end position="977"/>
    </location>
</feature>
<feature type="domain" description="Ig-like 10">
    <location>
        <begin position="978"/>
        <end position="1066"/>
    </location>
</feature>
<feature type="domain" description="Ig-like 11">
    <location>
        <begin position="1070"/>
        <end position="1161"/>
    </location>
</feature>
<feature type="domain" description="Ig-like 12">
    <location>
        <begin position="1162"/>
        <end position="1252"/>
    </location>
</feature>
<feature type="domain" description="Ig-like 13">
    <location>
        <begin position="1254"/>
        <end position="1345"/>
    </location>
</feature>
<feature type="domain" description="Ig-like 14">
    <location>
        <begin position="1346"/>
        <end position="1432"/>
    </location>
</feature>
<feature type="domain" description="Ig-like 15">
    <location>
        <begin position="1438"/>
        <end position="1524"/>
    </location>
</feature>
<feature type="domain" description="Ig-like 16">
    <location>
        <begin position="1530"/>
        <end position="1621"/>
    </location>
</feature>
<feature type="domain" description="Ig-like 17">
    <location>
        <begin position="1622"/>
        <end position="1719"/>
    </location>
</feature>
<feature type="domain" description="Fibronectin type-III 2" evidence="9">
    <location>
        <begin position="1731"/>
        <end position="1808"/>
    </location>
</feature>
<feature type="domain" description="Ig-like 18">
    <location>
        <begin position="1809"/>
        <end position="1894"/>
    </location>
</feature>
<feature type="domain" description="Ig-like 19">
    <location>
        <begin position="1896"/>
        <end position="1982"/>
    </location>
</feature>
<feature type="domain" description="Ig-like 20">
    <location>
        <begin position="1987"/>
        <end position="2071"/>
    </location>
</feature>
<feature type="domain" description="Ig-like 21">
    <location>
        <begin position="2077"/>
        <end position="2162"/>
    </location>
</feature>
<feature type="domain" description="Ig-like 22">
    <location>
        <begin position="2165"/>
        <end position="2249"/>
    </location>
</feature>
<feature type="domain" description="Ig-like 23">
    <location>
        <begin position="2289"/>
        <end position="2380"/>
    </location>
</feature>
<feature type="domain" description="Ig-like 24">
    <location>
        <begin position="2468"/>
        <end position="2559"/>
    </location>
</feature>
<feature type="domain" description="Ig-like 25">
    <location>
        <begin position="2564"/>
        <end position="2643"/>
    </location>
</feature>
<feature type="domain" description="Ig-like 26">
    <location>
        <begin position="2646"/>
        <end position="2730"/>
    </location>
</feature>
<feature type="domain" description="Ig-like 27">
    <location>
        <begin position="2736"/>
        <end position="2823"/>
    </location>
</feature>
<feature type="domain" description="Ig-like 28">
    <location>
        <begin position="2826"/>
        <end position="2908"/>
    </location>
</feature>
<feature type="domain" description="Ig-like 29">
    <location>
        <begin position="2920"/>
        <end position="2999"/>
    </location>
</feature>
<feature type="domain" description="Ig-like 30">
    <location>
        <begin position="3003"/>
        <end position="3092"/>
    </location>
</feature>
<feature type="domain" description="Ig-like 31">
    <location>
        <begin position="3095"/>
        <end position="3183"/>
    </location>
</feature>
<feature type="domain" description="Ig-like 32">
    <location>
        <begin position="3184"/>
        <end position="3268"/>
    </location>
</feature>
<feature type="domain" description="Ig-like 33">
    <location>
        <begin position="3273"/>
        <end position="3356"/>
    </location>
</feature>
<feature type="domain" description="Ig-like 34">
    <location>
        <begin position="3359"/>
        <end position="3444"/>
    </location>
</feature>
<feature type="domain" description="Ig-like 35">
    <location>
        <begin position="3449"/>
        <end position="3532"/>
    </location>
</feature>
<feature type="domain" description="Ig-like 36">
    <location>
        <begin position="3537"/>
        <end position="3620"/>
    </location>
</feature>
<feature type="domain" description="Ig-like 37">
    <location>
        <begin position="3625"/>
        <end position="3708"/>
    </location>
</feature>
<feature type="domain" description="Ig-like 38">
    <location>
        <begin position="3713"/>
        <end position="3796"/>
    </location>
</feature>
<feature type="domain" description="Ig-like 39">
    <location>
        <begin position="3801"/>
        <end position="3884"/>
    </location>
</feature>
<feature type="domain" description="Ig-like 40">
    <location>
        <begin position="3890"/>
        <end position="3973"/>
    </location>
</feature>
<feature type="domain" description="Ig-like 41">
    <location>
        <begin position="3978"/>
        <end position="4062"/>
    </location>
</feature>
<feature type="domain" description="Ig-like 42">
    <location>
        <begin position="4068"/>
        <end position="4160"/>
    </location>
</feature>
<feature type="domain" description="Ig-like 43">
    <location>
        <begin position="4171"/>
        <end position="4239"/>
    </location>
</feature>
<feature type="domain" description="Ig-like 44">
    <location>
        <begin position="4248"/>
        <end position="4337"/>
    </location>
</feature>
<feature type="domain" description="Ig-like 45">
    <location>
        <begin position="4340"/>
        <end position="4427"/>
    </location>
</feature>
<feature type="domain" description="Ig-like 46">
    <location>
        <begin position="4430"/>
        <end position="4518"/>
    </location>
</feature>
<feature type="domain" description="Fibronectin type-III 3" evidence="9">
    <location>
        <begin position="4525"/>
        <end position="4619"/>
    </location>
</feature>
<feature type="domain" description="Ig-like 47">
    <location>
        <begin position="4624"/>
        <end position="4714"/>
    </location>
</feature>
<feature type="domain" description="IQ" evidence="5">
    <location>
        <begin position="4872"/>
        <end position="4901"/>
    </location>
</feature>
<feature type="domain" description="Ig-like 48">
    <location>
        <begin position="4898"/>
        <end position="4989"/>
    </location>
</feature>
<feature type="domain" description="Ig-like 49">
    <location>
        <begin position="5126"/>
        <end position="5215"/>
    </location>
</feature>
<feature type="domain" description="Ig-like 50">
    <location>
        <begin position="5260"/>
        <end position="5349"/>
    </location>
</feature>
<feature type="domain" description="Ig-like 51">
    <location>
        <begin position="5371"/>
        <end position="5467"/>
    </location>
</feature>
<feature type="domain" description="SH3" evidence="8">
    <location>
        <begin position="5600"/>
        <end position="5667"/>
    </location>
</feature>
<feature type="domain" description="DH" evidence="3">
    <location>
        <begin position="5693"/>
        <end position="5877"/>
    </location>
</feature>
<feature type="domain" description="PH" evidence="6">
    <location>
        <begin position="5895"/>
        <end position="6004"/>
    </location>
</feature>
<feature type="domain" description="Ig-like 52">
    <location>
        <begin position="6014"/>
        <end position="6097"/>
    </location>
</feature>
<feature type="domain" description="Ig-like 53">
    <location>
        <begin position="6108"/>
        <end position="6200"/>
    </location>
</feature>
<feature type="domain" description="Ig-like 54">
    <location>
        <begin position="6357"/>
        <end position="6445"/>
    </location>
</feature>
<feature type="domain" description="Protein kinase 1" evidence="7">
    <location>
        <begin position="6468"/>
        <end position="6721"/>
    </location>
</feature>
<feature type="domain" description="Ig-like 55">
    <location>
        <begin position="7463"/>
        <end position="7552"/>
    </location>
</feature>
<feature type="domain" description="Fibronectin type-III 4" evidence="9">
    <location>
        <begin position="7557"/>
        <end position="7649"/>
    </location>
</feature>
<feature type="domain" description="Protein kinase 2" evidence="7">
    <location>
        <begin position="7672"/>
        <end position="7924"/>
    </location>
</feature>
<feature type="region of interest" description="Disordered" evidence="10">
    <location>
        <begin position="228"/>
        <end position="249"/>
    </location>
</feature>
<feature type="region of interest" description="Disordered" evidence="10">
    <location>
        <begin position="4749"/>
        <end position="4785"/>
    </location>
</feature>
<feature type="region of interest" description="Disordered" evidence="10">
    <location>
        <begin position="4820"/>
        <end position="4860"/>
    </location>
</feature>
<feature type="region of interest" description="Disordered" evidence="10">
    <location>
        <begin position="5238"/>
        <end position="5257"/>
    </location>
</feature>
<feature type="region of interest" description="Disordered" evidence="10">
    <location>
        <begin position="5554"/>
        <end position="5596"/>
    </location>
</feature>
<feature type="region of interest" description="Disordered" evidence="10">
    <location>
        <begin position="6237"/>
        <end position="6296"/>
    </location>
</feature>
<feature type="region of interest" description="Disordered" evidence="10">
    <location>
        <begin position="6777"/>
        <end position="6863"/>
    </location>
</feature>
<feature type="region of interest" description="Disordered" evidence="10">
    <location>
        <begin position="6952"/>
        <end position="7176"/>
    </location>
</feature>
<feature type="region of interest" description="Disordered" evidence="10">
    <location>
        <begin position="7217"/>
        <end position="7272"/>
    </location>
</feature>
<feature type="compositionally biased region" description="Polar residues" evidence="10">
    <location>
        <begin position="240"/>
        <end position="249"/>
    </location>
</feature>
<feature type="compositionally biased region" description="Polar residues" evidence="10">
    <location>
        <begin position="5238"/>
        <end position="5256"/>
    </location>
</feature>
<feature type="compositionally biased region" description="Low complexity" evidence="10">
    <location>
        <begin position="5570"/>
        <end position="5589"/>
    </location>
</feature>
<feature type="compositionally biased region" description="Polar residues" evidence="10">
    <location>
        <begin position="6266"/>
        <end position="6277"/>
    </location>
</feature>
<feature type="compositionally biased region" description="Pro residues" evidence="10">
    <location>
        <begin position="7052"/>
        <end position="7061"/>
    </location>
</feature>
<feature type="compositionally biased region" description="Low complexity" evidence="10">
    <location>
        <begin position="7115"/>
        <end position="7139"/>
    </location>
</feature>
<feature type="compositionally biased region" description="Polar residues" evidence="10">
    <location>
        <begin position="7160"/>
        <end position="7172"/>
    </location>
</feature>
<feature type="compositionally biased region" description="Basic and acidic residues" evidence="10">
    <location>
        <begin position="7227"/>
        <end position="7242"/>
    </location>
</feature>
<feature type="active site" description="Proton acceptor" evidence="1">
    <location>
        <position position="6587"/>
    </location>
</feature>
<feature type="active site" description="Proton acceptor" evidence="1">
    <location>
        <position position="7791"/>
    </location>
</feature>
<feature type="binding site" evidence="20">
    <location>
        <position position="5975"/>
    </location>
    <ligand>
        <name>a 1,2-diacyl-sn-glycero-3-phospho-(1D-myo-inositol-4,5-bisphosphate)</name>
        <dbReference type="ChEBI" id="CHEBI:58456"/>
    </ligand>
</feature>
<feature type="binding site" evidence="20">
    <location>
        <position position="5980"/>
    </location>
    <ligand>
        <name>a 1,2-diacyl-sn-glycero-3-phospho-(1D-myo-inositol-3,4-bisphosphate)</name>
        <dbReference type="ChEBI" id="CHEBI:57658"/>
    </ligand>
</feature>
<feature type="binding site" evidence="7">
    <location>
        <begin position="6474"/>
        <end position="6482"/>
    </location>
    <ligand>
        <name>ATP</name>
        <dbReference type="ChEBI" id="CHEBI:30616"/>
    </ligand>
</feature>
<feature type="binding site" evidence="7">
    <location>
        <position position="6497"/>
    </location>
    <ligand>
        <name>ATP</name>
        <dbReference type="ChEBI" id="CHEBI:30616"/>
    </ligand>
</feature>
<feature type="binding site" evidence="7">
    <location>
        <begin position="7678"/>
        <end position="7686"/>
    </location>
    <ligand>
        <name>ATP</name>
        <dbReference type="ChEBI" id="CHEBI:30616"/>
    </ligand>
</feature>
<feature type="binding site" evidence="7">
    <location>
        <position position="7701"/>
    </location>
    <ligand>
        <name>ATP</name>
        <dbReference type="ChEBI" id="CHEBI:30616"/>
    </ligand>
</feature>
<feature type="modified residue" description="Phosphoserine" evidence="2">
    <location>
        <position position="395"/>
    </location>
</feature>
<feature type="modified residue" description="Phosphoserine" evidence="2">
    <location>
        <position position="2889"/>
    </location>
</feature>
<feature type="modified residue" description="Phosphoserine" evidence="2">
    <location>
        <position position="4015"/>
    </location>
</feature>
<feature type="modified residue" description="Phosphoserine" evidence="2">
    <location>
        <position position="4750"/>
    </location>
</feature>
<feature type="modified residue" description="Phosphothreonine" evidence="2">
    <location>
        <position position="4754"/>
    </location>
</feature>
<feature type="modified residue" description="Phosphoserine" evidence="2">
    <location>
        <position position="4757"/>
    </location>
</feature>
<feature type="modified residue" description="Phosphothreonine" evidence="2">
    <location>
        <position position="4788"/>
    </location>
</feature>
<feature type="modified residue" description="Phosphoserine" evidence="2">
    <location>
        <position position="4805"/>
    </location>
</feature>
<feature type="modified residue" description="Phosphoserine" evidence="2">
    <location>
        <position position="5563"/>
    </location>
</feature>
<feature type="modified residue" description="Phosphothreonine" evidence="2">
    <location>
        <position position="5569"/>
    </location>
</feature>
<feature type="modified residue" description="Phosphoserine" evidence="2">
    <location>
        <position position="5571"/>
    </location>
</feature>
<feature type="modified residue" description="Phosphoserine" evidence="2">
    <location>
        <position position="5573"/>
    </location>
</feature>
<feature type="modified residue" description="Phosphoserine" evidence="25">
    <location>
        <position position="6831"/>
    </location>
</feature>
<feature type="modified residue" description="Phosphoserine" evidence="25">
    <location>
        <position position="7244"/>
    </location>
</feature>
<feature type="disulfide bond" evidence="4">
    <location>
        <begin position="31"/>
        <end position="82"/>
    </location>
</feature>
<feature type="disulfide bond" evidence="4">
    <location>
        <begin position="259"/>
        <end position="311"/>
    </location>
</feature>
<feature type="disulfide bond" evidence="4">
    <location>
        <begin position="354"/>
        <end position="404"/>
    </location>
</feature>
<feature type="disulfide bond" evidence="4">
    <location>
        <begin position="819"/>
        <end position="870"/>
    </location>
</feature>
<feature type="disulfide bond" evidence="4">
    <location>
        <begin position="912"/>
        <end position="962"/>
    </location>
</feature>
<feature type="disulfide bond" evidence="4">
    <location>
        <begin position="1004"/>
        <end position="1054"/>
    </location>
</feature>
<feature type="disulfide bond" evidence="4">
    <location>
        <begin position="1096"/>
        <end position="1146"/>
    </location>
</feature>
<feature type="disulfide bond" evidence="4">
    <location>
        <begin position="1188"/>
        <end position="1238"/>
    </location>
</feature>
<feature type="disulfide bond" evidence="4">
    <location>
        <begin position="1280"/>
        <end position="1330"/>
    </location>
</feature>
<feature type="disulfide bond" evidence="4">
    <location>
        <begin position="1372"/>
        <end position="1422"/>
    </location>
</feature>
<feature type="disulfide bond" evidence="4">
    <location>
        <begin position="1464"/>
        <end position="1514"/>
    </location>
</feature>
<feature type="disulfide bond" evidence="4">
    <location>
        <begin position="1556"/>
        <end position="1606"/>
    </location>
</feature>
<feature type="disulfide bond" evidence="4">
    <location>
        <begin position="1648"/>
        <end position="1698"/>
    </location>
</feature>
<feature type="disulfide bond" evidence="4">
    <location>
        <begin position="1723"/>
        <end position="1791"/>
    </location>
</feature>
<feature type="disulfide bond" evidence="4">
    <location>
        <begin position="1830"/>
        <end position="1880"/>
    </location>
</feature>
<feature type="disulfide bond" evidence="4">
    <location>
        <begin position="2187"/>
        <end position="2237"/>
    </location>
</feature>
<feature type="disulfide bond" evidence="4">
    <location>
        <begin position="2311"/>
        <end position="2361"/>
    </location>
</feature>
<feature type="disulfide bond" evidence="4">
    <location>
        <begin position="2490"/>
        <end position="2540"/>
    </location>
</feature>
<feature type="disulfide bond" evidence="4">
    <location>
        <begin position="2668"/>
        <end position="2718"/>
    </location>
</feature>
<feature type="disulfide bond" evidence="4">
    <location>
        <begin position="2848"/>
        <end position="2898"/>
    </location>
</feature>
<feature type="disulfide bond" evidence="4">
    <location>
        <begin position="2937"/>
        <end position="2987"/>
    </location>
</feature>
<feature type="disulfide bond" evidence="4">
    <location>
        <begin position="3117"/>
        <end position="3167"/>
    </location>
</feature>
<feature type="disulfide bond" evidence="4">
    <location>
        <begin position="3206"/>
        <end position="3256"/>
    </location>
</feature>
<feature type="disulfide bond" evidence="4">
    <location>
        <begin position="3295"/>
        <end position="3344"/>
    </location>
</feature>
<feature type="disulfide bond" evidence="4">
    <location>
        <begin position="3383"/>
        <end position="3432"/>
    </location>
</feature>
<feature type="disulfide bond" evidence="4">
    <location>
        <begin position="3471"/>
        <end position="3520"/>
    </location>
</feature>
<feature type="disulfide bond" evidence="4">
    <location>
        <begin position="3559"/>
        <end position="3608"/>
    </location>
</feature>
<feature type="disulfide bond" evidence="4">
    <location>
        <begin position="3647"/>
        <end position="3696"/>
    </location>
</feature>
<feature type="disulfide bond" evidence="4">
    <location>
        <begin position="3735"/>
        <end position="3784"/>
    </location>
</feature>
<feature type="disulfide bond" evidence="4">
    <location>
        <begin position="3823"/>
        <end position="3872"/>
    </location>
</feature>
<feature type="disulfide bond" evidence="4">
    <location>
        <begin position="3911"/>
        <end position="3961"/>
    </location>
</feature>
<feature type="disulfide bond" evidence="4">
    <location>
        <begin position="4000"/>
        <end position="4050"/>
    </location>
</feature>
<feature type="disulfide bond" evidence="4">
    <location>
        <begin position="4089"/>
        <end position="4141"/>
    </location>
</feature>
<feature type="disulfide bond" evidence="4">
    <location>
        <begin position="4453"/>
        <end position="4508"/>
    </location>
</feature>
<feature type="disulfide bond" evidence="4">
    <location>
        <begin position="4919"/>
        <end position="4971"/>
    </location>
</feature>
<feature type="disulfide bond" evidence="4">
    <location>
        <begin position="5147"/>
        <end position="5199"/>
    </location>
</feature>
<feature type="disulfide bond" evidence="4">
    <location>
        <begin position="6035"/>
        <end position="6087"/>
    </location>
</feature>
<feature type="disulfide bond" evidence="4">
    <location>
        <begin position="6129"/>
        <end position="6182"/>
    </location>
</feature>
<feature type="disulfide bond" evidence="4">
    <location>
        <begin position="7484"/>
        <end position="7536"/>
    </location>
</feature>
<feature type="splice variant" id="VSP_062488" description="In isoform 7.">
    <original>P</original>
    <variation>PKAVFAKEQPACREVQAEVGASATLSCEVAQDQMEVTWYKDGKKLSSSSKVHVEAVGCMRRLVVQQVGQADSGEYSCEARGQRVSFRLDVAEP</variation>
    <location>
        <position position="886"/>
    </location>
</feature>
<feature type="splice variant" id="VSP_062489" description="In isoform 7.">
    <original>Q</original>
    <variation>QPAHREVQAEAGASATLSCEVAQAQTEVTWYKDGKKLSSSLKVHVEAAGCTRRLVVQQAGQADTGEYSCEAGGQQLSFRLQVAEPKAVFAKEQ</variation>
    <location>
        <position position="1538"/>
    </location>
</feature>
<feature type="splice variant" id="VSP_062490" description="In isoform 7.">
    <original>Q</original>
    <variation>QLSFRLQVAEPKAVFAKEQVVFAKDQPVHREVQAEAGTSTMLSCEVAQAQTEVMWYKDGKKLSSSSKMRVEAVGCTRRLVVQEAGQADAGEYSCEAGGQRLSFHLHVAEPKVVFAKEQPACREVQAEAGASATLSCEVAQGQMEVTWYKDGKKLSSSSKVHMEASGYTRRLVVQQAGQADAGEYSCEAGGQR</variation>
    <location>
        <position position="1704"/>
    </location>
</feature>
<feature type="splice variant" id="VSP_062491" description="In isoform 7.">
    <original>R</original>
    <variation>RNIQIVRPLEDVEVMEKDGATFSCEVSHDEVPGQWFWEGSKLRPTDNVRIRQEGR</variation>
    <location>
        <position position="2253"/>
    </location>
</feature>
<feature type="splice variant" id="VSP_062492" description="In isoform 7.">
    <original>R</original>
    <variation>RTSATLTVRALPARFTQDLKTKEASEGATATLQCELSKVAPVEWKKGPETLRDGGRYSLKQDGTRCELQIHDLSVADAGEYSCMCGQERTSATLTVRALPARFTEGLRNEEAMEGATATLQCELSKAAPVEWRKGLEALRDGDKYSLRQDGAVCELQIHGLAMADNGVYSCVCGQERTSATLTVRALPARFIEDMRNQKATEGATVTLQCKLRKAAPVEWRKGPNTLKDGDRYSLKQDGTSCELQIRGLVIADAGEYSCICEQERTSATLTVRALPARFIEDVRNHEATEGATAVLQCELSKAAPVEWRKGSETLRDGDRYSLRQDGTRCELQIRGLAVEDTGEYLCVCGQERTSATLTVRALPARFIDNMTNQEAREGATATLHCELSKVAPVEWRKGPETLRDGDRHSLRQDGTRCELQIRGLSVADAGEYSCVCGQERTSATLTIRALPAKFTKGLRNEEATEGATAMLQCELSKVAPVEWRKGPETLRDGDRYNLRQDGTRCELQIHGLSVADTGEYSCVCGQEK</variation>
    <location>
        <position position="3878"/>
    </location>
</feature>
<feature type="splice variant" id="VSP_026970" description="In isoform 5." evidence="24">
    <original>K</original>
    <variation>RALPARFTQDLKTKEASEGATATLQCELSKVAPVEWKKGPETLRDGGRYSLKQDGTRCELQIHDLSVADAGEYSCMCGQERTSATLTVRALPARFTEGLRNEEAMEGATATLQCELSKAAPVEWRKGLEALRDGDKYSLRQDGAVCELQIHGLAMADNGVYSCVCGQERTSATLTVRALPARFIEDMRNQKATEGATVTLQCKLRKAAPVEWRKGPNTLKDGDRYSLKQDGTSCELQIRGLVIADAGEYSCICEQERTSATLTVRALPARFIEDVRNHEATEGATAVLQCELSKAAPVEWRKGSETLRDGDRYSLRQDGTRCELQIRGLAVEDTGEYLCVCGQERTSATLTVRALPARFIDNMTNQEAREGATATLHCELSKVAPVEWRKGPETLRDGDRHSLRQDGTRCELQIRGLSVADAGEYSCVCGQERTSATLTIREATEGATAMLQCELSKVAPVEWRKGPETLRDGDRYNLRQDGTRCELQIHGLSVADTGEYSCVCGQEKTSATLTVK</variation>
    <location>
        <position position="3886"/>
    </location>
</feature>
<feature type="splice variant" id="VSP_018436" description="In isoform 2." evidence="22">
    <original>S</original>
    <variation>SS</variation>
    <location>
        <position position="5753"/>
    </location>
</feature>
<feature type="splice variant" id="VSP_018437" description="In isoform 3." evidence="23">
    <original>DTTLERADQEVTSVLKRLLGPKAPGPSTGDLTGPGPCPRGAPALQETGSQPPVTGTSEAPAVPPRVPQPLLHEGPEQEPEAIARAQEWTVPIRMEGAAWPGAGTGELLWDVHSHVVRETTQRTYTYQAIDTHTARPPSMQVTIEDVQAQTGGTAQFEAIIEGDPQPSVTWYKDSVQLVDSTRLSQQQEGTTYSLVLRHVASKDAGVYTCLAQNTGGQVLCKAELLVLGGDNEPDSEKQSHRRKLHSFYEVKEEIGRGVFGFVKRVQHKGNKILCAAKFIPLRSRTRAQAYRERDILAALSHPLVTGLLDQFETRKTLILILELCSSEELLDRLYRKGVVTEAEVKVYIQQLVEGLHYLHSHGVLHLDIKPSNILMVHPAREDIKICDFGFAQNITPAELQ</original>
    <variation>VTEQETKVPKKTVIIEETITTVVKSPRGQRRSPSKSPSRSPSRCSASPLRPGLLAPDLLYLPGAGQPRRPEAEPGQKPVVPTLYVTEAEAHSPALPGLSGPQPKWVEVEETIEVRVKKMGPQGVSPTTEVPRSSSGHLFTLPGATPGGDPNSNNSNNKLLAQEAWAQGTAMVGVREPLVFRVDARGSVDWAASGMGSLEEEGTMEEAGEEEGEDGDAFVTEESQDTHSLGDRDPKILTHNGRMLTLADLEDYVPGEGETFHCGGPGPGAPDDPPCEVSVIQREIGEPTVGQPVLLSVGHALGPRGPLGLFRPEPRGASPPGPQVRSLEGTSFLLREAPARPVGSAPWTQSFCTRIRRSADSGQSSFTTELSTQTVNFGTVGETVTLHICPDRDGDEAAQP</variation>
    <location>
        <begin position="6221"/>
        <end position="6620"/>
    </location>
</feature>
<feature type="splice variant" id="VSP_018438" description="In isoform 3." evidence="23">
    <location>
        <begin position="6621"/>
        <end position="7968"/>
    </location>
</feature>
<feature type="sequence variant" id="VAR_026409" description="In dbSNP:rs1771487." evidence="12">
    <original>A</original>
    <variation>T</variation>
    <location>
        <position position="51"/>
    </location>
</feature>
<feature type="sequence variant" id="VAR_034618" description="In dbSNP:rs1771487." evidence="12 18">
    <original>Q</original>
    <variation>R</variation>
    <location>
        <position position="502"/>
    </location>
</feature>
<feature type="sequence variant" id="VAR_042276" description="In dbSNP:rs55950009." evidence="18">
    <original>G</original>
    <variation>S</variation>
    <location>
        <position position="804"/>
    </location>
</feature>
<feature type="sequence variant" id="VAR_047743" description="In dbSNP:rs1757153.">
    <original>A</original>
    <variation>T</variation>
    <location>
        <position position="908"/>
    </location>
</feature>
<feature type="sequence variant" id="VAR_042277" description="In dbSNP:rs55760713." evidence="18">
    <original>K</original>
    <variation>R</variation>
    <location>
        <position position="1027"/>
    </location>
</feature>
<feature type="sequence variant" id="VAR_042278" description="In dbSNP:rs117147433." evidence="18">
    <original>A</original>
    <variation>S</variation>
    <location>
        <position position="1086"/>
    </location>
</feature>
<feature type="sequence variant" id="VAR_042279" description="In dbSNP:rs752906025." evidence="18">
    <original>A</original>
    <variation>T</variation>
    <location>
        <position position="1090"/>
    </location>
</feature>
<feature type="sequence variant" id="VAR_042280" description="In dbSNP:rs965007403." evidence="18">
    <original>S</original>
    <variation>T</variation>
    <location>
        <position position="1091"/>
    </location>
</feature>
<feature type="sequence variant" id="VAR_042281" description="In dbSNP:rs780907202." evidence="18">
    <original>A</original>
    <variation>P</variation>
    <location>
        <position position="1101"/>
    </location>
</feature>
<feature type="sequence variant" id="VAR_042282" evidence="18">
    <original>G</original>
    <variation>R</variation>
    <location>
        <position position="1121"/>
    </location>
</feature>
<feature type="sequence variant" id="VAR_042283" description="In dbSNP:rs777214598." evidence="18">
    <original>L</original>
    <variation>V</variation>
    <location>
        <position position="1133"/>
    </location>
</feature>
<feature type="sequence variant" id="VAR_035530" description="In a colorectal cancer sample; somatic mutation; dbSNP:rs950055015." evidence="17 18">
    <original>A</original>
    <variation>V</variation>
    <location>
        <position position="1136"/>
    </location>
</feature>
<feature type="sequence variant" id="VAR_042284" description="In dbSNP:rs1180577013." evidence="18">
    <original>H</original>
    <variation>Q</variation>
    <location>
        <position position="1156"/>
    </location>
</feature>
<feature type="sequence variant" id="VAR_042285" description="In dbSNP:rs199523598." evidence="18">
    <original>Q</original>
    <variation>H</variation>
    <location>
        <position position="1248"/>
    </location>
</feature>
<feature type="sequence variant" id="VAR_034619" description="In dbSNP:rs7532342." evidence="12">
    <original>V</original>
    <variation>D</variation>
    <location>
        <position position="1508"/>
    </location>
</feature>
<feature type="sequence variant" id="VAR_042286" description="In dbSNP:rs453140." evidence="18">
    <original>A</original>
    <variation>V</variation>
    <location>
        <position position="1532"/>
    </location>
</feature>
<feature type="sequence variant" id="VAR_042287" description="In dbSNP:rs56217040." evidence="18">
    <original>T</original>
    <variation>M</variation>
    <location>
        <position position="1566"/>
    </location>
</feature>
<feature type="sequence variant" id="VAR_042288" description="In dbSNP:rs55706639." evidence="18">
    <original>A</original>
    <variation>T</variation>
    <location>
        <position position="1601"/>
    </location>
</feature>
<feature type="sequence variant" id="VAR_035531" description="In a colorectal cancer sample; somatic mutation; dbSNP:rs750681123." evidence="17">
    <original>R</original>
    <variation>H</variation>
    <location>
        <position position="1792"/>
    </location>
</feature>
<feature type="sequence variant" id="VAR_035532" description="In a colorectal cancer sample; somatic mutation; dbSNP:rs545316651." evidence="17">
    <original>V</original>
    <variation>M</variation>
    <location>
        <position position="1930"/>
    </location>
</feature>
<feature type="sequence variant" id="VAR_035533" description="In a colorectal cancer sample; somatic mutation." evidence="17">
    <original>E</original>
    <variation>K</variation>
    <location>
        <position position="2090"/>
    </location>
</feature>
<feature type="sequence variant" id="VAR_047744" description="In dbSNP:rs1188721.">
    <original>D</original>
    <variation>E</variation>
    <location>
        <position position="2106"/>
    </location>
</feature>
<feature type="sequence variant" id="VAR_047745" description="In dbSNP:rs1188722.">
    <original>F</original>
    <variation>L</variation>
    <location>
        <position position="2116"/>
    </location>
</feature>
<feature type="sequence variant" id="VAR_035534" description="In a breast cancer sample; somatic mutation." evidence="17">
    <original>S</original>
    <variation>F</variation>
    <location>
        <position position="2314"/>
    </location>
</feature>
<feature type="sequence variant" id="VAR_088090" description="Risk factor for RHABDO1." evidence="21">
    <location>
        <begin position="2322"/>
        <end position="7968"/>
    </location>
</feature>
<feature type="sequence variant" id="VAR_047746" description="In dbSNP:rs3795783.">
    <original>R</original>
    <variation>Q</variation>
    <location>
        <position position="2529"/>
    </location>
</feature>
<feature type="sequence variant" id="VAR_047747" description="In dbSNP:rs1188697.">
    <original>V</original>
    <variation>M</variation>
    <location>
        <position position="2720"/>
    </location>
</feature>
<feature type="sequence variant" id="VAR_047748" description="In dbSNP:rs3795785.">
    <original>R</original>
    <variation>W</variation>
    <location>
        <position position="2812"/>
    </location>
</feature>
<feature type="sequence variant" id="VAR_088091" description="Risk factor for RHABDO1." evidence="21">
    <location>
        <begin position="3279"/>
        <end position="7968"/>
    </location>
</feature>
<feature type="sequence variant" id="VAR_034620" description="In dbSNP:rs437129." evidence="12">
    <original>A</original>
    <variation>T</variation>
    <location>
        <position position="3300"/>
    </location>
</feature>
<feature type="sequence variant" id="VAR_047749" description="In dbSNP:rs3795789.">
    <original>E</original>
    <variation>D</variation>
    <location>
        <position position="3372"/>
    </location>
</feature>
<feature type="sequence variant" id="VAR_047750" description="In dbSNP:rs3795790.">
    <original>S</original>
    <variation>C</variation>
    <location>
        <position position="3373"/>
    </location>
</feature>
<feature type="sequence variant" id="VAR_042289" description="In dbSNP:rs770177081." evidence="18">
    <original>A</original>
    <variation>V</variation>
    <location>
        <position position="3389"/>
    </location>
</feature>
<feature type="sequence variant" id="VAR_042290" evidence="18">
    <original>D</original>
    <variation>E</variation>
    <location>
        <position position="3426"/>
    </location>
</feature>
<feature type="sequence variant" id="VAR_042291" evidence="18">
    <original>R</original>
    <variation>G</variation>
    <location>
        <position position="3834"/>
    </location>
</feature>
<feature type="sequence variant" id="VAR_088092" description="Risk factor for RHABDO1." evidence="21">
    <location>
        <begin position="3983"/>
        <end position="7968"/>
    </location>
</feature>
<feature type="sequence variant" id="VAR_035535" description="In a colorectal cancer sample; somatic mutation; dbSNP:rs539154039." evidence="17">
    <original>R</original>
    <variation>Q</variation>
    <location>
        <position position="3983"/>
    </location>
</feature>
<feature type="sequence variant" id="VAR_047751" description="In dbSNP:rs435776.">
    <original>G</original>
    <variation>R</variation>
    <location>
        <position position="4039"/>
    </location>
</feature>
<feature type="sequence variant" id="VAR_034621" description="In dbSNP:rs1150912." evidence="12">
    <original>H</original>
    <variation>R</variation>
    <location>
        <position position="4381"/>
    </location>
</feature>
<feature type="sequence variant" id="VAR_034622" description="In dbSNP:rs1188732." evidence="12">
    <original>C</original>
    <variation>R</variation>
    <location>
        <position position="4450"/>
    </location>
</feature>
<feature type="sequence variant" id="VAR_088093" description="Risk factor for RHABDO1; greatly reduced protein levels detected by Wester blot in skeletal muscle from a homozygous patient." evidence="21">
    <location>
        <begin position="4453"/>
        <end position="7968"/>
    </location>
</feature>
<feature type="sequence variant" id="VAR_074295" description="In dbSNP:rs369570923." evidence="19">
    <original>L</original>
    <variation>R</variation>
    <location>
        <position position="4492"/>
    </location>
</feature>
<feature type="sequence variant" id="VAR_059429" description="In dbSNP:rs11810627.">
    <original>R</original>
    <variation>W</variation>
    <location>
        <position position="4516"/>
    </location>
</feature>
<feature type="sequence variant" id="VAR_026410" description="In dbSNP:rs4653942." evidence="12">
    <original>R</original>
    <variation>H</variation>
    <location>
        <position position="4534"/>
    </location>
</feature>
<feature type="sequence variant" id="VAR_035536" description="In a colorectal cancer sample; somatic mutation; dbSNP:rs199865640." evidence="17">
    <original>R</original>
    <variation>H</variation>
    <location>
        <position position="4558"/>
    </location>
</feature>
<feature type="sequence variant" id="VAR_056102" description="In dbSNP:rs1188729.">
    <original>S</original>
    <variation>C</variation>
    <location>
        <position position="4642"/>
    </location>
</feature>
<feature type="sequence variant" id="VAR_056103" description="In dbSNP:rs3795800.">
    <original>R</original>
    <variation>C</variation>
    <location>
        <position position="4662"/>
    </location>
</feature>
<feature type="sequence variant" id="VAR_056104" description="In dbSNP:rs3795801.">
    <original>G</original>
    <variation>S</variation>
    <location>
        <position position="4666"/>
    </location>
</feature>
<feature type="sequence variant" id="VAR_035537" description="In a breast cancer sample; somatic mutation; dbSNP:rs570805670." evidence="17">
    <original>R</original>
    <variation>Q</variation>
    <location>
        <position position="4810"/>
    </location>
</feature>
<feature type="sequence variant" id="VAR_042292" evidence="18">
    <original>A</original>
    <variation>S</variation>
    <location>
        <position position="4823"/>
    </location>
</feature>
<feature type="sequence variant" id="VAR_056105" description="In dbSNP:rs373610.">
    <original>D</original>
    <variation>G</variation>
    <location>
        <position position="4962"/>
    </location>
</feature>
<feature type="sequence variant" id="VAR_035538" description="In a breast cancer sample; somatic mutation." evidence="17">
    <original>A</original>
    <variation>T</variation>
    <location>
        <position position="5071"/>
    </location>
</feature>
<feature type="sequence variant" id="VAR_056106" description="In dbSNP:rs369909.">
    <original>L</original>
    <variation>V</variation>
    <location>
        <position position="5269"/>
    </location>
</feature>
<feature type="sequence variant" id="VAR_056107" description="In dbSNP:rs3795809.">
    <original>R</original>
    <variation>H</variation>
    <location>
        <position position="5575"/>
    </location>
</feature>
<feature type="sequence variant" id="VAR_042293" description="In dbSNP:rs867550675." evidence="18">
    <original>R</original>
    <variation>Q</variation>
    <location>
        <position position="5598"/>
    </location>
</feature>
<feature type="sequence variant" id="VAR_056108" description="In dbSNP:rs1188710.">
    <original>Q</original>
    <variation>E</variation>
    <location>
        <position position="5891"/>
    </location>
</feature>
<feature type="sequence variant" id="VAR_042294" evidence="18">
    <original>E</original>
    <variation>Q</variation>
    <location>
        <position position="6473"/>
    </location>
</feature>
<feature type="sequence variant" id="VAR_056109" description="In dbSNP:rs500049." evidence="11">
    <original>A</original>
    <variation>V</variation>
    <location>
        <position position="7172"/>
    </location>
</feature>
<feature type="mutagenesis site" description="Reduced binding to phosphatidylinositol 4,5-bisphosphate." evidence="20">
    <original>R</original>
    <variation>A</variation>
    <location>
        <position position="5975"/>
    </location>
</feature>
<feature type="mutagenesis site" description="Reduced binding to phosphatidylinositol 3,4-bisphosphate." evidence="20">
    <original>R</original>
    <variation>A</variation>
    <location>
        <position position="5980"/>
    </location>
</feature>
<feature type="sequence conflict" description="In Ref. 1; CAC85746." evidence="24" ref="1">
    <original>V</original>
    <variation>A</variation>
    <location>
        <position position="888"/>
    </location>
</feature>
<feature type="sequence conflict" description="In Ref. 1; CAC85746." evidence="24" ref="1">
    <original>L</original>
    <variation>P</variation>
    <location>
        <position position="895"/>
    </location>
</feature>
<feature type="sequence conflict" description="In Ref. 1; CAC85746." evidence="24" ref="1">
    <original>R</original>
    <variation>C</variation>
    <location>
        <position position="897"/>
    </location>
</feature>
<feature type="sequence conflict" description="In Ref. 1; CAC85746." evidence="24" ref="1">
    <original>KL</original>
    <variation>EV</variation>
    <location>
        <begin position="899"/>
        <end position="900"/>
    </location>
</feature>
<feature type="sequence conflict" description="In Ref. 1; CAC85746." evidence="24" ref="1">
    <original>A</original>
    <variation>V</variation>
    <location>
        <position position="904"/>
    </location>
</feature>
<feature type="sequence conflict" description="In Ref. 1; CAC85746." evidence="24" ref="1">
    <original>A</original>
    <variation>D</variation>
    <location>
        <position position="917"/>
    </location>
</feature>
<feature type="sequence conflict" description="In Ref. 1; CAC85746." evidence="24" ref="1">
    <original>T</original>
    <variation>M</variation>
    <location>
        <position position="919"/>
    </location>
</feature>
<feature type="sequence conflict" description="In Ref. 1; CAC85746." evidence="24" ref="1">
    <original>CM</original>
    <variation>HV</variation>
    <location>
        <begin position="937"/>
        <end position="938"/>
    </location>
</feature>
<feature type="sequence conflict" description="In Ref. 1; CAC85746." evidence="24" ref="1">
    <original>T</original>
    <variation>V</variation>
    <location>
        <position position="941"/>
    </location>
</feature>
<feature type="sequence conflict" description="In Ref. 1; CAC85746." evidence="24" ref="1">
    <original>T</original>
    <variation>M</variation>
    <location>
        <position position="944"/>
    </location>
</feature>
<feature type="sequence conflict" description="In Ref. 1; CAC85746." evidence="24" ref="1">
    <original>A</original>
    <variation>V</variation>
    <location>
        <position position="952"/>
    </location>
</feature>
<feature type="sequence conflict" description="In Ref. 1; CAC85746." evidence="24" ref="1">
    <original>A</original>
    <variation>S</variation>
    <location>
        <position position="957"/>
    </location>
</feature>
<feature type="sequence conflict" description="In Ref. 1; CAC85746." evidence="24" ref="1">
    <original>G</original>
    <variation>R</variation>
    <location>
        <position position="965"/>
    </location>
</feature>
<feature type="sequence conflict" description="In Ref. 1; CAC85746." evidence="24" ref="1">
    <original>L</original>
    <variation>V</variation>
    <location>
        <position position="969"/>
    </location>
</feature>
<feature type="sequence conflict" description="In Ref. 1; CAC85746." evidence="24" ref="1">
    <original>H</original>
    <variation>R</variation>
    <location>
        <position position="972"/>
    </location>
</feature>
<feature type="sequence conflict" description="In Ref. 1; CAC44768." evidence="24" ref="1">
    <original>S</original>
    <variation>N</variation>
    <location>
        <position position="999"/>
    </location>
</feature>
<feature type="sequence conflict" description="In Ref. 1; CAC44768." evidence="24" ref="1">
    <original>T</original>
    <variation>A</variation>
    <location>
        <position position="1011"/>
    </location>
</feature>
<feature type="sequence conflict" description="In Ref. 1; CAC85746." evidence="24" ref="1">
    <original>A</original>
    <variation>V</variation>
    <location>
        <position position="1348"/>
    </location>
</feature>
<feature type="sequence conflict" description="In Ref. 1; CAC85749." evidence="24" ref="1">
    <original>L</original>
    <variation>P</variation>
    <location>
        <position position="1355"/>
    </location>
</feature>
<feature type="sequence conflict" description="In Ref. 1; CAC85746." evidence="24" ref="1">
    <original>H</original>
    <variation>R</variation>
    <location>
        <position position="1357"/>
    </location>
</feature>
<feature type="sequence conflict" description="In Ref. 1; CAC85749." evidence="24" ref="1">
    <original>K</original>
    <variation>E</variation>
    <location>
        <position position="1359"/>
    </location>
</feature>
<feature type="sequence conflict" description="In Ref. 1; CAC85746." evidence="24" ref="1">
    <original>V</original>
    <variation>L</variation>
    <location>
        <position position="1360"/>
    </location>
</feature>
<feature type="sequence conflict" description="In Ref. 1; CAC85746/CAC85749." evidence="24" ref="1">
    <original>I</original>
    <variation>S</variation>
    <location>
        <position position="1367"/>
    </location>
</feature>
<feature type="sequence conflict" description="In Ref. 1; CAC85749." evidence="24" ref="1">
    <original>S</original>
    <variation>L</variation>
    <location>
        <position position="1394"/>
    </location>
</feature>
<feature type="sequence conflict" description="In Ref. 1; CAC85749." evidence="24" ref="1">
    <original>RM</original>
    <variation>HV</variation>
    <location>
        <begin position="1397"/>
        <end position="1398"/>
    </location>
</feature>
<feature type="sequence conflict" description="In Ref. 1; CAC85746." evidence="24" ref="1">
    <original>R</original>
    <variation>C</variation>
    <location>
        <position position="1397"/>
    </location>
</feature>
<feature type="sequence conflict" description="In Ref. 1; CAC85749." evidence="24" ref="1">
    <original>V</original>
    <variation>A</variation>
    <location>
        <position position="1401"/>
    </location>
</feature>
<feature type="sequence conflict" description="In Ref. 1; CAC85746." evidence="24" ref="1">
    <original>V</original>
    <variation>T</variation>
    <location>
        <position position="1401"/>
    </location>
</feature>
<feature type="sequence conflict" description="In Ref. 1; CAC85746/CAC85749." evidence="24" ref="1">
    <original>C</original>
    <variation>G</variation>
    <location>
        <position position="1413"/>
    </location>
</feature>
<feature type="sequence conflict" description="In Ref. 1; CAC85746." evidence="24" ref="1">
    <original>T</original>
    <variation>A</variation>
    <location>
        <position position="1417"/>
    </location>
</feature>
<feature type="sequence conflict" description="In Ref. 1; CAC85749." evidence="24" ref="1">
    <original>R</original>
    <variation>Q</variation>
    <location>
        <position position="1428"/>
    </location>
</feature>
<feature type="sequence conflict" description="In Ref. 1; CAC85746." evidence="24" ref="1">
    <original>S</original>
    <variation>H</variation>
    <location>
        <position position="1432"/>
    </location>
</feature>
<feature type="sequence conflict" description="In Ref. 1; CAC85750." evidence="24" ref="1">
    <original>E</original>
    <variation>D</variation>
    <location>
        <position position="1445"/>
    </location>
</feature>
<feature type="sequence conflict" description="In Ref. 1; CAC85750." evidence="24" ref="1">
    <original>Q</original>
    <variation>E</variation>
    <location>
        <position position="1455"/>
    </location>
</feature>
<feature type="sequence conflict" description="In Ref. 1; CAC85750." evidence="24" ref="1">
    <original>A</original>
    <variation>T</variation>
    <location>
        <position position="1458"/>
    </location>
</feature>
<feature type="sequence conflict" description="In Ref. 1; CAC85750." evidence="24" ref="1">
    <original>T</original>
    <variation>M</variation>
    <location>
        <position position="1461"/>
    </location>
</feature>
<feature type="sequence conflict" description="In Ref. 1; CAC85749." evidence="24" ref="1">
    <original>H</original>
    <variation>R</variation>
    <location>
        <position position="1524"/>
    </location>
</feature>
<feature type="sequence conflict" description="In Ref. 1; CAC85749." evidence="24" ref="1">
    <original>H</original>
    <variation>Q</variation>
    <location>
        <position position="1526"/>
    </location>
</feature>
<feature type="sequence conflict" description="In Ref. 1; CAC85750." evidence="24" ref="1">
    <original>VRM</original>
    <variation>MRV</variation>
    <location>
        <begin position="1580"/>
        <end position="1582"/>
    </location>
</feature>
<feature type="sequence conflict" description="In Ref. 1; CAC85750." evidence="24" ref="1">
    <original>K</original>
    <variation>E</variation>
    <location>
        <position position="1607"/>
    </location>
</feature>
<feature type="sequence conflict" description="In Ref. 1; CAC85750." evidence="24" ref="1">
    <original>D</original>
    <variation>G</variation>
    <location>
        <position position="1610"/>
    </location>
</feature>
<feature type="sequence conflict" description="In Ref. 1; CAC85750." evidence="24" ref="1">
    <original>H</original>
    <variation>C</variation>
    <location>
        <position position="1633"/>
    </location>
</feature>
<feature type="sequence conflict" description="In Ref. 1; CAC85750." evidence="24" ref="1">
    <original>AQT</original>
    <variation>GQM</variation>
    <location>
        <begin position="1653"/>
        <end position="1655"/>
    </location>
</feature>
<feature type="sequence conflict" description="In Ref. 1; CAC85750." evidence="24" ref="1">
    <original>RV</original>
    <variation>HM</variation>
    <location>
        <begin position="1673"/>
        <end position="1674"/>
    </location>
</feature>
<feature type="sequence conflict" description="In Ref. 1; CAC85750." evidence="24" ref="1">
    <original>VGC</original>
    <variation>SGY</variation>
    <location>
        <begin position="1677"/>
        <end position="1679"/>
    </location>
</feature>
<feature type="sequence conflict" description="In Ref. 1; CAC44768/CAC85750." evidence="24" ref="1">
    <original>E</original>
    <variation>D</variation>
    <location>
        <position position="1692"/>
    </location>
</feature>
<feature type="sequence conflict" description="In Ref. 1; CAC44768/CAC85750." evidence="24" ref="1">
    <original>Q</original>
    <variation>R</variation>
    <location>
        <position position="1704"/>
    </location>
</feature>
<feature type="sequence conflict" description="In Ref. 1; CAC44768." evidence="24" ref="1">
    <original>H</original>
    <variation>Q</variation>
    <location>
        <position position="1710"/>
    </location>
</feature>
<feature type="sequence conflict" description="In Ref. 1; CAC44768." evidence="24" ref="1">
    <original>L</original>
    <variation>P</variation>
    <location>
        <position position="1848"/>
    </location>
</feature>
<feature type="sequence conflict" description="In Ref. 1; CAC85750." evidence="24" ref="1">
    <original>P</original>
    <variation>A</variation>
    <location>
        <position position="2014"/>
    </location>
</feature>
<feature type="sequence conflict" description="In Ref. 1; CAC44768." evidence="24" ref="1">
    <original>V</original>
    <variation>M</variation>
    <location>
        <position position="3126"/>
    </location>
</feature>
<feature type="sequence conflict" description="In Ref. 3; CAC85752." evidence="24" ref="3">
    <original>T</original>
    <variation>TG</variation>
    <location>
        <position position="4155"/>
    </location>
</feature>
<feature type="sequence conflict" description="In Ref. 1; CAC44768." evidence="24" ref="1">
    <original>H</original>
    <variation>Q</variation>
    <location>
        <position position="4489"/>
    </location>
</feature>
<feature type="sequence conflict" description="In Ref. 1; CAC44768." evidence="24" ref="1">
    <original>T</original>
    <variation>A</variation>
    <location>
        <position position="4959"/>
    </location>
</feature>
<feature type="sequence conflict" description="In Ref. 1; CAC85753." evidence="24" ref="1">
    <original>S</original>
    <variation>ST</variation>
    <location>
        <position position="5243"/>
    </location>
</feature>
<feature type="sequence conflict" description="In Ref. 4; BAB13465." evidence="24" ref="4">
    <original>S</original>
    <variation>F</variation>
    <location>
        <position position="5391"/>
    </location>
</feature>
<feature type="sequence conflict" description="In Ref. 1; CAC44768." evidence="24" ref="1">
    <original>LE</original>
    <variation>FQ</variation>
    <location>
        <begin position="5499"/>
        <end position="5500"/>
    </location>
</feature>
<feature type="sequence conflict" description="In Ref. 1; CAC44768." evidence="24" ref="1">
    <original>R</original>
    <variation>L</variation>
    <location>
        <position position="6115"/>
    </location>
</feature>
<feature type="sequence conflict" description="In Ref. 3; CAJ76912." evidence="24" ref="3">
    <original>Q</original>
    <variation>E</variation>
    <location>
        <position position="6570"/>
    </location>
</feature>
<feature type="sequence conflict" description="In Ref. 3; CAJ76912." evidence="24" ref="3">
    <original>PS</original>
    <variation>SG</variation>
    <location>
        <begin position="6710"/>
        <end position="6711"/>
    </location>
</feature>
<feature type="strand" evidence="39">
    <location>
        <begin position="9"/>
        <end position="14"/>
    </location>
</feature>
<feature type="strand" evidence="39">
    <location>
        <begin position="17"/>
        <end position="19"/>
    </location>
</feature>
<feature type="strand" evidence="39">
    <location>
        <begin position="27"/>
        <end position="37"/>
    </location>
</feature>
<feature type="strand" evidence="39">
    <location>
        <begin position="40"/>
        <end position="45"/>
    </location>
</feature>
<feature type="strand" evidence="39">
    <location>
        <begin position="53"/>
        <end position="61"/>
    </location>
</feature>
<feature type="strand" evidence="39">
    <location>
        <begin position="64"/>
        <end position="69"/>
    </location>
</feature>
<feature type="helix" evidence="39">
    <location>
        <begin position="74"/>
        <end position="76"/>
    </location>
</feature>
<feature type="strand" evidence="39">
    <location>
        <begin position="78"/>
        <end position="85"/>
    </location>
</feature>
<feature type="strand" evidence="39">
    <location>
        <begin position="87"/>
        <end position="97"/>
    </location>
</feature>
<feature type="strand" evidence="41">
    <location>
        <begin position="110"/>
        <end position="112"/>
    </location>
</feature>
<feature type="strand" evidence="41">
    <location>
        <begin position="117"/>
        <end position="122"/>
    </location>
</feature>
<feature type="strand" evidence="41">
    <location>
        <begin position="125"/>
        <end position="137"/>
    </location>
</feature>
<feature type="strand" evidence="41">
    <location>
        <begin position="142"/>
        <end position="145"/>
    </location>
</feature>
<feature type="strand" evidence="41">
    <location>
        <begin position="154"/>
        <end position="162"/>
    </location>
</feature>
<feature type="strand" evidence="41">
    <location>
        <begin position="164"/>
        <end position="171"/>
    </location>
</feature>
<feature type="helix" evidence="41">
    <location>
        <begin position="176"/>
        <end position="178"/>
    </location>
</feature>
<feature type="strand" evidence="41">
    <location>
        <begin position="180"/>
        <end position="188"/>
    </location>
</feature>
<feature type="strand" evidence="41">
    <location>
        <begin position="191"/>
        <end position="202"/>
    </location>
</feature>
<feature type="strand" evidence="45">
    <location>
        <begin position="1082"/>
        <end position="1086"/>
    </location>
</feature>
<feature type="strand" evidence="45">
    <location>
        <begin position="1090"/>
        <end position="1096"/>
    </location>
</feature>
<feature type="strand" evidence="45">
    <location>
        <begin position="1099"/>
        <end position="1101"/>
    </location>
</feature>
<feature type="strand" evidence="45">
    <location>
        <begin position="1106"/>
        <end position="1111"/>
    </location>
</feature>
<feature type="strand" evidence="45">
    <location>
        <begin position="1116"/>
        <end position="1124"/>
    </location>
</feature>
<feature type="strand" evidence="45">
    <location>
        <begin position="1126"/>
        <end position="1136"/>
    </location>
</feature>
<feature type="helix" evidence="45">
    <location>
        <begin position="1138"/>
        <end position="1140"/>
    </location>
</feature>
<feature type="strand" evidence="45">
    <location>
        <begin position="1142"/>
        <end position="1147"/>
    </location>
</feature>
<feature type="strand" evidence="45">
    <location>
        <begin position="1152"/>
        <end position="1159"/>
    </location>
</feature>
<feature type="strand" evidence="44">
    <location>
        <begin position="1164"/>
        <end position="1167"/>
    </location>
</feature>
<feature type="strand" evidence="44">
    <location>
        <begin position="1174"/>
        <end position="1178"/>
    </location>
</feature>
<feature type="strand" evidence="44">
    <location>
        <begin position="1182"/>
        <end position="1186"/>
    </location>
</feature>
<feature type="strand" evidence="44">
    <location>
        <begin position="1198"/>
        <end position="1201"/>
    </location>
</feature>
<feature type="strand" evidence="44">
    <location>
        <begin position="1210"/>
        <end position="1217"/>
    </location>
</feature>
<feature type="strand" evidence="44">
    <location>
        <begin position="1220"/>
        <end position="1227"/>
    </location>
</feature>
<feature type="strand" evidence="44">
    <location>
        <begin position="1237"/>
        <end position="1239"/>
    </location>
</feature>
<feature type="strand" evidence="44">
    <location>
        <begin position="1248"/>
        <end position="1251"/>
    </location>
</feature>
<feature type="strand" evidence="37">
    <location>
        <begin position="1634"/>
        <end position="1639"/>
    </location>
</feature>
<feature type="strand" evidence="37">
    <location>
        <begin position="1644"/>
        <end position="1646"/>
    </location>
</feature>
<feature type="strand" evidence="37">
    <location>
        <begin position="1653"/>
        <end position="1655"/>
    </location>
</feature>
<feature type="strand" evidence="37">
    <location>
        <begin position="1658"/>
        <end position="1661"/>
    </location>
</feature>
<feature type="strand" evidence="37">
    <location>
        <begin position="1670"/>
        <end position="1677"/>
    </location>
</feature>
<feature type="strand" evidence="37">
    <location>
        <begin position="1680"/>
        <end position="1685"/>
    </location>
</feature>
<feature type="turn" evidence="37">
    <location>
        <begin position="1690"/>
        <end position="1692"/>
    </location>
</feature>
<feature type="strand" evidence="37">
    <location>
        <begin position="1696"/>
        <end position="1700"/>
    </location>
</feature>
<feature type="strand" evidence="37">
    <location>
        <begin position="1707"/>
        <end position="1712"/>
    </location>
</feature>
<feature type="strand" evidence="36">
    <location>
        <begin position="2745"/>
        <end position="2750"/>
    </location>
</feature>
<feature type="strand" evidence="36">
    <location>
        <begin position="2753"/>
        <end position="2758"/>
    </location>
</feature>
<feature type="strand" evidence="36">
    <location>
        <begin position="2771"/>
        <end position="2776"/>
    </location>
</feature>
<feature type="strand" evidence="36">
    <location>
        <begin position="2784"/>
        <end position="2788"/>
    </location>
</feature>
<feature type="strand" evidence="36">
    <location>
        <begin position="2791"/>
        <end position="2796"/>
    </location>
</feature>
<feature type="turn" evidence="36">
    <location>
        <begin position="2801"/>
        <end position="2803"/>
    </location>
</feature>
<feature type="strand" evidence="36">
    <location>
        <begin position="2807"/>
        <end position="2811"/>
    </location>
</feature>
<feature type="strand" evidence="36">
    <location>
        <begin position="2814"/>
        <end position="2818"/>
    </location>
</feature>
<feature type="strand" evidence="36">
    <location>
        <begin position="2820"/>
        <end position="2823"/>
    </location>
</feature>
<feature type="strand" evidence="30">
    <location>
        <begin position="2829"/>
        <end position="2831"/>
    </location>
</feature>
<feature type="strand" evidence="30">
    <location>
        <begin position="2836"/>
        <end position="2838"/>
    </location>
</feature>
<feature type="strand" evidence="30">
    <location>
        <begin position="2844"/>
        <end position="2846"/>
    </location>
</feature>
<feature type="strand" evidence="30">
    <location>
        <begin position="2849"/>
        <end position="2854"/>
    </location>
</feature>
<feature type="strand" evidence="30">
    <location>
        <begin position="2859"/>
        <end position="2863"/>
    </location>
</feature>
<feature type="strand" evidence="30">
    <location>
        <begin position="2869"/>
        <end position="2877"/>
    </location>
</feature>
<feature type="strand" evidence="30">
    <location>
        <begin position="2880"/>
        <end position="2887"/>
    </location>
</feature>
<feature type="turn" evidence="30">
    <location>
        <begin position="2890"/>
        <end position="2892"/>
    </location>
</feature>
<feature type="strand" evidence="30">
    <location>
        <begin position="2894"/>
        <end position="2899"/>
    </location>
</feature>
<feature type="strand" evidence="30">
    <location>
        <begin position="2904"/>
        <end position="2911"/>
    </location>
</feature>
<feature type="strand" evidence="28">
    <location>
        <begin position="2925"/>
        <end position="2928"/>
    </location>
</feature>
<feature type="strand" evidence="28">
    <location>
        <begin position="2931"/>
        <end position="2938"/>
    </location>
</feature>
<feature type="strand" evidence="28">
    <location>
        <begin position="2947"/>
        <end position="2952"/>
    </location>
</feature>
<feature type="strand" evidence="28">
    <location>
        <begin position="2957"/>
        <end position="2966"/>
    </location>
</feature>
<feature type="strand" evidence="28">
    <location>
        <begin position="2969"/>
        <end position="2976"/>
    </location>
</feature>
<feature type="turn" evidence="28">
    <location>
        <begin position="2979"/>
        <end position="2981"/>
    </location>
</feature>
<feature type="strand" evidence="28">
    <location>
        <begin position="2983"/>
        <end position="2988"/>
    </location>
</feature>
<feature type="strand" evidence="28">
    <location>
        <begin position="2996"/>
        <end position="3001"/>
    </location>
</feature>
<feature type="strand" evidence="27">
    <location>
        <begin position="3006"/>
        <end position="3009"/>
    </location>
</feature>
<feature type="strand" evidence="27">
    <location>
        <begin position="3013"/>
        <end position="3017"/>
    </location>
</feature>
<feature type="strand" evidence="27">
    <location>
        <begin position="3027"/>
        <end position="3030"/>
    </location>
</feature>
<feature type="strand" evidence="27">
    <location>
        <begin position="3037"/>
        <end position="3042"/>
    </location>
</feature>
<feature type="strand" evidence="27">
    <location>
        <begin position="3048"/>
        <end position="3050"/>
    </location>
</feature>
<feature type="turn" evidence="27">
    <location>
        <begin position="3057"/>
        <end position="3059"/>
    </location>
</feature>
<feature type="strand" evidence="27">
    <location>
        <begin position="3063"/>
        <end position="3065"/>
    </location>
</feature>
<feature type="turn" evidence="27">
    <location>
        <begin position="3070"/>
        <end position="3072"/>
    </location>
</feature>
<feature type="strand" evidence="27">
    <location>
        <begin position="3074"/>
        <end position="3080"/>
    </location>
</feature>
<feature type="strand" evidence="27">
    <location>
        <begin position="3087"/>
        <end position="3092"/>
    </location>
</feature>
<feature type="strand" evidence="38">
    <location>
        <begin position="3187"/>
        <end position="3189"/>
    </location>
</feature>
<feature type="strand" evidence="38">
    <location>
        <begin position="3194"/>
        <end position="3197"/>
    </location>
</feature>
<feature type="strand" evidence="38">
    <location>
        <begin position="3202"/>
        <end position="3210"/>
    </location>
</feature>
<feature type="strand" evidence="38">
    <location>
        <begin position="3216"/>
        <end position="3219"/>
    </location>
</feature>
<feature type="strand" evidence="38">
    <location>
        <begin position="3227"/>
        <end position="3235"/>
    </location>
</feature>
<feature type="strand" evidence="38">
    <location>
        <begin position="3238"/>
        <end position="3243"/>
    </location>
</feature>
<feature type="helix" evidence="38">
    <location>
        <begin position="3248"/>
        <end position="3250"/>
    </location>
</feature>
<feature type="strand" evidence="38">
    <location>
        <begin position="3252"/>
        <end position="3258"/>
    </location>
</feature>
<feature type="strand" evidence="38">
    <location>
        <begin position="3261"/>
        <end position="3270"/>
    </location>
</feature>
<feature type="strand" evidence="34">
    <location>
        <begin position="3371"/>
        <end position="3374"/>
    </location>
</feature>
<feature type="strand" evidence="34">
    <location>
        <begin position="3386"/>
        <end position="3388"/>
    </location>
</feature>
<feature type="strand" evidence="34">
    <location>
        <begin position="3392"/>
        <end position="3397"/>
    </location>
</feature>
<feature type="strand" evidence="34">
    <location>
        <begin position="3402"/>
        <end position="3405"/>
    </location>
</feature>
<feature type="strand" evidence="34">
    <location>
        <begin position="3407"/>
        <end position="3410"/>
    </location>
</feature>
<feature type="strand" evidence="34">
    <location>
        <begin position="3412"/>
        <end position="3421"/>
    </location>
</feature>
<feature type="turn" evidence="34">
    <location>
        <begin position="3424"/>
        <end position="3426"/>
    </location>
</feature>
<feature type="strand" evidence="34">
    <location>
        <begin position="3430"/>
        <end position="3433"/>
    </location>
</feature>
<feature type="strand" evidence="34">
    <location>
        <begin position="3438"/>
        <end position="3441"/>
    </location>
</feature>
<feature type="strand" evidence="34">
    <location>
        <begin position="3443"/>
        <end position="3446"/>
    </location>
</feature>
<feature type="strand" evidence="35">
    <location>
        <begin position="3452"/>
        <end position="3454"/>
    </location>
</feature>
<feature type="strand" evidence="35">
    <location>
        <begin position="3459"/>
        <end position="3462"/>
    </location>
</feature>
<feature type="strand" evidence="35">
    <location>
        <begin position="3467"/>
        <end position="3475"/>
    </location>
</feature>
<feature type="strand" evidence="35">
    <location>
        <begin position="3480"/>
        <end position="3483"/>
    </location>
</feature>
<feature type="strand" evidence="35">
    <location>
        <begin position="3490"/>
        <end position="3509"/>
    </location>
</feature>
<feature type="turn" evidence="35">
    <location>
        <begin position="3512"/>
        <end position="3514"/>
    </location>
</feature>
<feature type="strand" evidence="35">
    <location>
        <begin position="3516"/>
        <end position="3522"/>
    </location>
</feature>
<feature type="strand" evidence="35">
    <location>
        <begin position="3525"/>
        <end position="3534"/>
    </location>
</feature>
<feature type="strand" evidence="29">
    <location>
        <begin position="3548"/>
        <end position="3550"/>
    </location>
</feature>
<feature type="strand" evidence="29">
    <location>
        <begin position="3555"/>
        <end position="3564"/>
    </location>
</feature>
<feature type="strand" evidence="29">
    <location>
        <begin position="3568"/>
        <end position="3575"/>
    </location>
</feature>
<feature type="strand" evidence="29">
    <location>
        <begin position="3578"/>
        <end position="3581"/>
    </location>
</feature>
<feature type="strand" evidence="29">
    <location>
        <begin position="3583"/>
        <end position="3587"/>
    </location>
</feature>
<feature type="strand" evidence="29">
    <location>
        <begin position="3590"/>
        <end position="3597"/>
    </location>
</feature>
<feature type="turn" evidence="29">
    <location>
        <begin position="3600"/>
        <end position="3602"/>
    </location>
</feature>
<feature type="strand" evidence="29">
    <location>
        <begin position="3604"/>
        <end position="3610"/>
    </location>
</feature>
<feature type="strand" evidence="29">
    <location>
        <begin position="3613"/>
        <end position="3618"/>
    </location>
</feature>
<feature type="strand" evidence="29">
    <location>
        <begin position="3620"/>
        <end position="3622"/>
    </location>
</feature>
<feature type="strand" evidence="31">
    <location>
        <begin position="3628"/>
        <end position="3630"/>
    </location>
</feature>
<feature type="strand" evidence="31">
    <location>
        <begin position="3643"/>
        <end position="3651"/>
    </location>
</feature>
<feature type="strand" evidence="31">
    <location>
        <begin position="3656"/>
        <end position="3663"/>
    </location>
</feature>
<feature type="strand" evidence="31">
    <location>
        <begin position="3667"/>
        <end position="3675"/>
    </location>
</feature>
<feature type="strand" evidence="31">
    <location>
        <begin position="3678"/>
        <end position="3683"/>
    </location>
</feature>
<feature type="strand" evidence="31">
    <location>
        <begin position="3692"/>
        <end position="3698"/>
    </location>
</feature>
<feature type="strand" evidence="31">
    <location>
        <begin position="3701"/>
        <end position="3709"/>
    </location>
</feature>
<feature type="strand" evidence="33">
    <location>
        <begin position="3716"/>
        <end position="3718"/>
    </location>
</feature>
<feature type="strand" evidence="33">
    <location>
        <begin position="3723"/>
        <end position="3726"/>
    </location>
</feature>
<feature type="strand" evidence="33">
    <location>
        <begin position="3731"/>
        <end position="3739"/>
    </location>
</feature>
<feature type="strand" evidence="33">
    <location>
        <begin position="3744"/>
        <end position="3751"/>
    </location>
</feature>
<feature type="strand" evidence="33">
    <location>
        <begin position="3754"/>
        <end position="3757"/>
    </location>
</feature>
<feature type="strand" evidence="33">
    <location>
        <begin position="3759"/>
        <end position="3763"/>
    </location>
</feature>
<feature type="strand" evidence="33">
    <location>
        <begin position="3766"/>
        <end position="3773"/>
    </location>
</feature>
<feature type="turn" evidence="33">
    <location>
        <begin position="3776"/>
        <end position="3778"/>
    </location>
</feature>
<feature type="strand" evidence="33">
    <location>
        <begin position="3780"/>
        <end position="3788"/>
    </location>
</feature>
<feature type="strand" evidence="33">
    <location>
        <begin position="3790"/>
        <end position="3798"/>
    </location>
</feature>
<feature type="strand" evidence="32">
    <location>
        <begin position="3811"/>
        <end position="3814"/>
    </location>
</feature>
<feature type="strand" evidence="32">
    <location>
        <begin position="3820"/>
        <end position="3824"/>
    </location>
</feature>
<feature type="strand" evidence="32">
    <location>
        <begin position="3826"/>
        <end position="3828"/>
    </location>
</feature>
<feature type="strand" evidence="32">
    <location>
        <begin position="3831"/>
        <end position="3837"/>
    </location>
</feature>
<feature type="strand" evidence="32">
    <location>
        <begin position="3842"/>
        <end position="3848"/>
    </location>
</feature>
<feature type="strand" evidence="32">
    <location>
        <begin position="3852"/>
        <end position="3861"/>
    </location>
</feature>
<feature type="helix" evidence="32">
    <location>
        <begin position="3864"/>
        <end position="3866"/>
    </location>
</feature>
<feature type="strand" evidence="32">
    <location>
        <begin position="3870"/>
        <end position="3874"/>
    </location>
</feature>
<feature type="strand" evidence="32">
    <location>
        <begin position="3877"/>
        <end position="3880"/>
    </location>
</feature>
<feature type="strand" evidence="32">
    <location>
        <begin position="3883"/>
        <end position="3886"/>
    </location>
</feature>
<feature type="strand" evidence="43">
    <location>
        <begin position="4257"/>
        <end position="4262"/>
    </location>
</feature>
<feature type="strand" evidence="43">
    <location>
        <begin position="4267"/>
        <end position="4272"/>
    </location>
</feature>
<feature type="strand" evidence="43">
    <location>
        <begin position="4282"/>
        <end position="4285"/>
    </location>
</feature>
<feature type="strand" evidence="43">
    <location>
        <begin position="4294"/>
        <end position="4301"/>
    </location>
</feature>
<feature type="turn" evidence="43">
    <location>
        <begin position="4302"/>
        <end position="4304"/>
    </location>
</feature>
<feature type="strand" evidence="43">
    <location>
        <begin position="4305"/>
        <end position="4310"/>
    </location>
</feature>
<feature type="turn" evidence="43">
    <location>
        <begin position="4315"/>
        <end position="4317"/>
    </location>
</feature>
<feature type="strand" evidence="43">
    <location>
        <begin position="4319"/>
        <end position="4324"/>
    </location>
</feature>
<feature type="strand" evidence="43">
    <location>
        <begin position="4329"/>
        <end position="4337"/>
    </location>
</feature>
<feature type="strand" evidence="40">
    <location>
        <begin position="4342"/>
        <end position="4344"/>
    </location>
</feature>
<feature type="strand" evidence="40">
    <location>
        <begin position="4349"/>
        <end position="4351"/>
    </location>
</feature>
<feature type="strand" evidence="40">
    <location>
        <begin position="4353"/>
        <end position="4365"/>
    </location>
</feature>
<feature type="strand" evidence="40">
    <location>
        <begin position="4369"/>
        <end position="4375"/>
    </location>
</feature>
<feature type="strand" evidence="40">
    <location>
        <begin position="4386"/>
        <end position="4391"/>
    </location>
</feature>
<feature type="helix" evidence="40">
    <location>
        <begin position="4392"/>
        <end position="4394"/>
    </location>
</feature>
<feature type="strand" evidence="40">
    <location>
        <begin position="4396"/>
        <end position="4403"/>
    </location>
</feature>
<feature type="helix" evidence="40">
    <location>
        <begin position="4406"/>
        <end position="4408"/>
    </location>
</feature>
<feature type="strand" evidence="40">
    <location>
        <begin position="4410"/>
        <end position="4416"/>
    </location>
</feature>
<feature type="strand" evidence="40">
    <location>
        <begin position="4419"/>
        <end position="4427"/>
    </location>
</feature>
<feature type="strand" evidence="42">
    <location>
        <begin position="4434"/>
        <end position="4436"/>
    </location>
</feature>
<feature type="strand" evidence="42">
    <location>
        <begin position="4441"/>
        <end position="4444"/>
    </location>
</feature>
<feature type="strand" evidence="42">
    <location>
        <begin position="4449"/>
        <end position="4457"/>
    </location>
</feature>
<feature type="helix" evidence="42">
    <location>
        <begin position="4461"/>
        <end position="4463"/>
    </location>
</feature>
<feature type="strand" evidence="42">
    <location>
        <begin position="4464"/>
        <end position="4468"/>
    </location>
</feature>
<feature type="strand" evidence="42">
    <location>
        <begin position="4478"/>
        <end position="4485"/>
    </location>
</feature>
<feature type="strand" evidence="42">
    <location>
        <begin position="4488"/>
        <end position="4495"/>
    </location>
</feature>
<feature type="helix" evidence="42">
    <location>
        <begin position="4498"/>
        <end position="4500"/>
    </location>
</feature>
<feature type="strand" evidence="42">
    <location>
        <begin position="4502"/>
        <end position="4508"/>
    </location>
</feature>
<feature type="strand" evidence="42">
    <location>
        <begin position="4511"/>
        <end position="4520"/>
    </location>
</feature>
<feature type="strand" evidence="26">
    <location>
        <begin position="5604"/>
        <end position="5609"/>
    </location>
</feature>
<feature type="strand" evidence="26">
    <location>
        <begin position="5628"/>
        <end position="5636"/>
    </location>
</feature>
<feature type="strand" evidence="26">
    <location>
        <begin position="5639"/>
        <end position="5644"/>
    </location>
</feature>
<feature type="strand" evidence="26">
    <location>
        <begin position="5654"/>
        <end position="5657"/>
    </location>
</feature>
<feature type="helix" evidence="26">
    <location>
        <begin position="5659"/>
        <end position="5661"/>
    </location>
</feature>
<feature type="strand" evidence="26">
    <location>
        <begin position="5662"/>
        <end position="5665"/>
    </location>
</feature>
<proteinExistence type="evidence at protein level"/>
<comment type="function">
    <text evidence="2 12 16 20">Structural component of striated muscles which plays a role in myofibrillogenesis. Probably involved in the assembly of myosin into sarcomeric A bands in striated muscle (PubMed:11448995, PubMed:16205939). Has serine/threonine protein kinase activity and phosphorylates N-cadherin CDH2 and sodium/potassium-transporting ATPase subunit ATP1B1 (By similarity). Binds (via the PH domain) strongly to phosphatidylinositol 3,4-bisphosphate (PtdIns(3,4)P2) and phosphatidylinositol 4,5-bisphosphate (PtdIns(4,5)P2), and to a lesser extent to phosphatidylinositol 3-phosphate (PtdIns(3)P), phosphatidylinositol 4-phosphate (PtdIns(4)P), phosphatidylinositol 5-phosphate (PtdIns(5)P) and phosphatidylinositol 3,4,5-trisphosphate (PtdIns(3,4,5)P3) (PubMed:28826662).</text>
</comment>
<comment type="catalytic activity">
    <reaction evidence="2">
        <text>L-seryl-[protein] + ATP = O-phospho-L-seryl-[protein] + ADP + H(+)</text>
        <dbReference type="Rhea" id="RHEA:17989"/>
        <dbReference type="Rhea" id="RHEA-COMP:9863"/>
        <dbReference type="Rhea" id="RHEA-COMP:11604"/>
        <dbReference type="ChEBI" id="CHEBI:15378"/>
        <dbReference type="ChEBI" id="CHEBI:29999"/>
        <dbReference type="ChEBI" id="CHEBI:30616"/>
        <dbReference type="ChEBI" id="CHEBI:83421"/>
        <dbReference type="ChEBI" id="CHEBI:456216"/>
        <dbReference type="EC" id="2.7.11.1"/>
    </reaction>
</comment>
<comment type="catalytic activity">
    <reaction evidence="2">
        <text>L-threonyl-[protein] + ATP = O-phospho-L-threonyl-[protein] + ADP + H(+)</text>
        <dbReference type="Rhea" id="RHEA:46608"/>
        <dbReference type="Rhea" id="RHEA-COMP:11060"/>
        <dbReference type="Rhea" id="RHEA-COMP:11605"/>
        <dbReference type="ChEBI" id="CHEBI:15378"/>
        <dbReference type="ChEBI" id="CHEBI:30013"/>
        <dbReference type="ChEBI" id="CHEBI:30616"/>
        <dbReference type="ChEBI" id="CHEBI:61977"/>
        <dbReference type="ChEBI" id="CHEBI:456216"/>
        <dbReference type="EC" id="2.7.11.1"/>
    </reaction>
</comment>
<comment type="cofactor">
    <cofactor evidence="2">
        <name>Mg(2+)</name>
        <dbReference type="ChEBI" id="CHEBI:18420"/>
    </cofactor>
</comment>
<comment type="subunit">
    <text evidence="2 12 13 14">Interacts (via protein kinase domain 2) with CDH2 and (via protein kinase domain 1) with ATP1B1 (By similarity). Isoform 3 interacts with TTN/titin and calmodulin (PubMed:11448995, PubMed:11717165). Isoform 3 interacts with ANK1 isoform Mu17/ank1.5 (PubMed:12527750).</text>
</comment>
<comment type="interaction">
    <interactant intactId="EBI-941850">
        <id>Q5VST9</id>
    </interactant>
    <interactant intactId="EBI-681210">
        <id>Q8WZ42</id>
        <label>TTN</label>
    </interactant>
    <organismsDiffer>false</organismsDiffer>
    <experiments>15</experiments>
</comment>
<comment type="interaction">
    <interactant intactId="EBI-941921">
        <id>Q5VST9-3</id>
    </interactant>
    <interactant intactId="EBI-941686">
        <id>P16157</id>
        <label>ANK1</label>
    </interactant>
    <organismsDiffer>false</organismsDiffer>
    <experiments>3</experiments>
</comment>
<comment type="interaction">
    <interactant intactId="EBI-941921">
        <id>Q5VST9-3</id>
    </interactant>
    <interactant intactId="EBI-941819">
        <id>P16157-17</id>
        <label>ANK1</label>
    </interactant>
    <organismsDiffer>false</organismsDiffer>
    <experiments>8</experiments>
</comment>
<comment type="subcellular location">
    <molecule>Isoform 3</molecule>
    <subcellularLocation>
        <location evidence="14">Cytoplasm</location>
        <location evidence="14">Myofibril</location>
        <location evidence="14">Sarcomere</location>
        <location evidence="14">M line</location>
    </subcellularLocation>
    <subcellularLocation>
        <location evidence="14">Cytoplasm</location>
        <location evidence="14">Myofibril</location>
        <location evidence="14">Sarcomere</location>
        <location evidence="14">Z line</location>
    </subcellularLocation>
    <text>In differentiating skeletal muscle cells, isoform 3 primarily localizes to the sarcomeric M-line and less frequently to the Z-disk (PubMed:12527750). Isoform 3 colocalizes with ANK1 isoform Mu17/ank1.5 at the M-line in differentiated skeletal muscle cells (PubMed:12527750).</text>
</comment>
<comment type="subcellular location">
    <subcellularLocation>
        <location evidence="2">Cytoplasm</location>
        <location evidence="2">Myofibril</location>
        <location evidence="2">Sarcomere</location>
        <location evidence="2">M line</location>
    </subcellularLocation>
    <subcellularLocation>
        <location evidence="2">Cytoplasm</location>
        <location evidence="2">Myofibril</location>
        <location evidence="2">Sarcomere</location>
        <location evidence="2">Z line</location>
    </subcellularLocation>
    <subcellularLocation>
        <location evidence="2">Cell membrane</location>
        <location evidence="2">Sarcolemma</location>
    </subcellularLocation>
    <subcellularLocation>
        <location evidence="2">Nucleus</location>
    </subcellularLocation>
    <text evidence="2">Colocalizes with CDH2 and ATP1B1 to the sarcolemma and to intercalating disks in cardiac muscles. Colocalizes with ATP1B1 to M line and Z line in cardiac muscles.</text>
</comment>
<comment type="alternative products">
    <event type="alternative splicing"/>
    <isoform>
        <id>Q5VST9-1</id>
        <name>1</name>
        <name>B</name>
        <name>obscurin-MLCK giant kinase</name>
        <sequence type="displayed"/>
    </isoform>
    <isoform>
        <id>Q5VST9-2</id>
        <name>2</name>
        <sequence type="described" ref="VSP_018436"/>
    </isoform>
    <isoform>
        <id>Q5VST9-3</id>
        <name>3</name>
        <name>unc-89-like</name>
        <sequence type="described" ref="VSP_018437 VSP_018438"/>
    </isoform>
    <isoform>
        <id>Q5VST9-6</id>
        <name>5</name>
        <sequence type="described" ref="VSP_026970"/>
    </isoform>
    <isoform>
        <id>Q5VST9-7</id>
        <name>7</name>
        <sequence type="described" ref="VSP_062488 VSP_062489 VSP_062490 VSP_062491 VSP_062492"/>
    </isoform>
    <text>Additional isoforms seem to exist.</text>
</comment>
<comment type="PTM">
    <text evidence="2">Autophosphorylated by protein kinase domains 1 and 2.</text>
</comment>
<comment type="disease" evidence="21">
    <disease id="DI-06601">
        <name>Rhabdomyolysis 1</name>
        <acronym>RHABDO1</acronym>
        <description>An autosomal recessive disorder characterized by severe and recurrent rhabdomyolysis, usually with onset in the teenage years. Some of the episodes may be triggered by exercise or heat; others occur spontaneously. Rhabdomyolysis is the rapid breakdown of damaged or injured skeletal myofibres and may require intensive care management. Muscle breakdown results in release of myofibrillar content into the extracellular space and circulation, resulting in hyperCKemia (hyperCK) and myoglobinuria. RHABDO1 patients may have a history of myalgia and muscle cramps that precede the initial rhabdomyolysis episodes.</description>
        <dbReference type="MIM" id="620235"/>
    </disease>
    <text>Disease susceptibility is associated with variants affecting the gene represented in this entry.</text>
</comment>
<comment type="disease">
    <text evidence="15">A chromosomal aberration involving OBSCN has been found in Wilms tumor. Translocation t(1;7)(q42;p15) with PTHB1.</text>
</comment>
<comment type="miscellaneous">
    <molecule>Isoform 3</molecule>
    <text evidence="24">Lacks the kinase domain. Initially described as obscurin.</text>
</comment>
<comment type="similarity">
    <text evidence="24">Belongs to the protein kinase superfamily. CAMK Ser/Thr protein kinase family.</text>
</comment>
<comment type="caution">
    <text evidence="24">Initially the name obscurin was used to describe isoform 3 which lacks the kinase domains.</text>
</comment>
<comment type="sequence caution" evidence="24">
    <conflict type="miscellaneous discrepancy">
        <sequence resource="EMBL-CDS" id="BAB13382"/>
    </conflict>
</comment>
<comment type="sequence caution" evidence="24">
    <conflict type="erroneous gene model prediction">
        <sequence resource="EMBL-CDS" id="CAC85746"/>
    </conflict>
</comment>
<comment type="sequence caution" evidence="24">
    <conflict type="erroneous gene model prediction">
        <sequence resource="EMBL-CDS" id="CAC85749"/>
    </conflict>
</comment>
<comment type="sequence caution" evidence="24">
    <conflict type="erroneous gene model prediction">
        <sequence resource="EMBL-CDS" id="CAC85750"/>
    </conflict>
</comment>
<evidence type="ECO:0000250" key="1"/>
<evidence type="ECO:0000250" key="2">
    <source>
        <dbReference type="UniProtKB" id="A2AAJ9"/>
    </source>
</evidence>
<evidence type="ECO:0000255" key="3">
    <source>
        <dbReference type="PROSITE-ProRule" id="PRU00062"/>
    </source>
</evidence>
<evidence type="ECO:0000255" key="4">
    <source>
        <dbReference type="PROSITE-ProRule" id="PRU00114"/>
    </source>
</evidence>
<evidence type="ECO:0000255" key="5">
    <source>
        <dbReference type="PROSITE-ProRule" id="PRU00116"/>
    </source>
</evidence>
<evidence type="ECO:0000255" key="6">
    <source>
        <dbReference type="PROSITE-ProRule" id="PRU00145"/>
    </source>
</evidence>
<evidence type="ECO:0000255" key="7">
    <source>
        <dbReference type="PROSITE-ProRule" id="PRU00159"/>
    </source>
</evidence>
<evidence type="ECO:0000255" key="8">
    <source>
        <dbReference type="PROSITE-ProRule" id="PRU00192"/>
    </source>
</evidence>
<evidence type="ECO:0000255" key="9">
    <source>
        <dbReference type="PROSITE-ProRule" id="PRU00316"/>
    </source>
</evidence>
<evidence type="ECO:0000256" key="10">
    <source>
        <dbReference type="SAM" id="MobiDB-lite"/>
    </source>
</evidence>
<evidence type="ECO:0000269" key="11">
    <source>
    </source>
</evidence>
<evidence type="ECO:0000269" key="12">
    <source>
    </source>
</evidence>
<evidence type="ECO:0000269" key="13">
    <source>
    </source>
</evidence>
<evidence type="ECO:0000269" key="14">
    <source>
    </source>
</evidence>
<evidence type="ECO:0000269" key="15">
    <source>
    </source>
</evidence>
<evidence type="ECO:0000269" key="16">
    <source>
    </source>
</evidence>
<evidence type="ECO:0000269" key="17">
    <source>
    </source>
</evidence>
<evidence type="ECO:0000269" key="18">
    <source>
    </source>
</evidence>
<evidence type="ECO:0000269" key="19">
    <source>
    </source>
</evidence>
<evidence type="ECO:0000269" key="20">
    <source>
    </source>
</evidence>
<evidence type="ECO:0000269" key="21">
    <source>
    </source>
</evidence>
<evidence type="ECO:0000303" key="22">
    <source>
    </source>
</evidence>
<evidence type="ECO:0000303" key="23">
    <source>
    </source>
</evidence>
<evidence type="ECO:0000305" key="24"/>
<evidence type="ECO:0007744" key="25">
    <source>
    </source>
</evidence>
<evidence type="ECO:0007829" key="26">
    <source>
        <dbReference type="PDB" id="1V1C"/>
    </source>
</evidence>
<evidence type="ECO:0007829" key="27">
    <source>
        <dbReference type="PDB" id="2CR6"/>
    </source>
</evidence>
<evidence type="ECO:0007829" key="28">
    <source>
        <dbReference type="PDB" id="2DKU"/>
    </source>
</evidence>
<evidence type="ECO:0007829" key="29">
    <source>
        <dbReference type="PDB" id="2DM7"/>
    </source>
</evidence>
<evidence type="ECO:0007829" key="30">
    <source>
        <dbReference type="PDB" id="2EDF"/>
    </source>
</evidence>
<evidence type="ECO:0007829" key="31">
    <source>
        <dbReference type="PDB" id="2EDH"/>
    </source>
</evidence>
<evidence type="ECO:0007829" key="32">
    <source>
        <dbReference type="PDB" id="2EDL"/>
    </source>
</evidence>
<evidence type="ECO:0007829" key="33">
    <source>
        <dbReference type="PDB" id="2EDQ"/>
    </source>
</evidence>
<evidence type="ECO:0007829" key="34">
    <source>
        <dbReference type="PDB" id="2EDR"/>
    </source>
</evidence>
<evidence type="ECO:0007829" key="35">
    <source>
        <dbReference type="PDB" id="2EDT"/>
    </source>
</evidence>
<evidence type="ECO:0007829" key="36">
    <source>
        <dbReference type="PDB" id="2ENY"/>
    </source>
</evidence>
<evidence type="ECO:0007829" key="37">
    <source>
        <dbReference type="PDB" id="2EO1"/>
    </source>
</evidence>
<evidence type="ECO:0007829" key="38">
    <source>
        <dbReference type="PDB" id="2YZ8"/>
    </source>
</evidence>
<evidence type="ECO:0007829" key="39">
    <source>
        <dbReference type="PDB" id="4C4K"/>
    </source>
</evidence>
<evidence type="ECO:0007829" key="40">
    <source>
        <dbReference type="PDB" id="4RSV"/>
    </source>
</evidence>
<evidence type="ECO:0007829" key="41">
    <source>
        <dbReference type="PDB" id="4UOW"/>
    </source>
</evidence>
<evidence type="ECO:0007829" key="42">
    <source>
        <dbReference type="PDB" id="5TZM"/>
    </source>
</evidence>
<evidence type="ECO:0007829" key="43">
    <source>
        <dbReference type="PDB" id="6MG9"/>
    </source>
</evidence>
<evidence type="ECO:0007829" key="44">
    <source>
        <dbReference type="PDB" id="7R67"/>
    </source>
</evidence>
<evidence type="ECO:0007829" key="45">
    <source>
        <dbReference type="PDB" id="7R68"/>
    </source>
</evidence>
<sequence>MDQPQFSGAPRFLTRPKAFVVSVGKDATLSCQIVGNPTPQVSWEKDQQPVAAGARFRLAQDGDLYRLTILDLALGDSGQYVCRARNAIGEAFAAVGLQVDAEAACAEQAPHFLLRPTSIRVREGSEATFRCRVGGSPRPAVSWSKDGRRLGEPDGPRVRVEELGEASALRIRAARPRDGGTYEVRAENPLGAASAAAALVVDSDAADTASRPGTSTAALLAHLQRRREAMRAEGAPASPPSTGTRTCTVTEGKHARLSCYVTGEPKPETVWKKDGQLVTEGRRHVVYEDAQENFVLKILFCKQSDRGLYTCTASNLVGQTYSSVLVVVREPAVPFKKRLQDLEVREKESATFLCEVPQPSTEAAWFKEETRLWASAKYGIEEEGTERRLTVRNVSADDDAVYICETPEGSRTVAELAVQGNLLRKLPRKTAVRVGDTAMFCVELAVPVGPVHWLRNQEEVVAGGRVAISAEGTRHTLTISQCCLEDVGQVAFMAGDCQTSTQFCVSAPRKPPLQPPVDPVVKARMESSVILSWSPPPHGERPVTIDGYLVEKKKLGTYTWIRCHEAEWVATPELTVADVAEEGNFQFRVSALNSFGQSPYLEFPGTVHLAPKLAVRTPLKAVQAVEGGEVTFSVDLTVASAGEWFLDGQALKASSVYEIHCDRTRHTLTIREVPASLHGAQLKFVANGIESSIRMEVRAAPGLTANKPPAAAAREVLARLHEEAQLLAELSDQAAAVTWLKDGRTLSPGPKYEVQASAGRRVLLVRDVARDDAGLYECVSRGGRIAYQLSVQGLARFLHKDMAGSCVDAVAGGPAQFECETSEAHVHVHWYKDGMELGHSGERFLQEDVGTRHRLVAATVTRQDEGTYSCRVGEDSVDFRLRVSEPKVVFAKEQLARRKLQAEAGASATLSCEVAQAQTEVTWYKDGKKLSSSSKVCMEATGCTRRLVVQQAGQADAGEYSCEAGGQRLSFHLDVKEPKVVFAKDQVAHSEVQAEAGASATLSCEVAQAQTEVMWYKDGKKLSSSLKVHVEAKGCRRRLVVQQAGKTDAGDYSCEARGQRVSFRLHITEPKMMFAKEQSVHNEVQAEAGASAMLSCEVAQAQTEVTWYKDGKKLSSSSKVGMEVKGCTRRLVLPQAGKADAGEYSCEAGGQRVSFHLHITEPKGVFAKEQSVHNEVQAEAGTTAMLSCEVAQPQTEVTWYKDGKKLSSSSKVRMEVKGCTRRLVVQQVGKADAGEYSCEAGGQRVSFQLHITEPKAVFAKEQLVHNEVRTEAGASATLSCEVAQAQTEVTWYKDGKKLSSSSKVRIEAAGCMRQLVVQQAGQADAGEYTCEAGGQRLSFHLDVSEPKAVFAKEQLAHRKVQAEAGAIATLSCEVAQAQTEVTWYKDGKKLSSSSKVRMEAVGCTRRLVVQQACQADTGEYSCEAGGQRLSFSLDVAEPKVVFAKEQPVHREVQAQAGASTTLSCEVAQAQTEVMWYKDGKKLSFSSKVRMEAVGCTRRLVVQQAGQAVAGEYSCEAGSQRLSFHLHVAEPKAVFAKEQPASREVQAEAGTSATLSCEVAQAQTEVTWYKDGKKLSSSSKVRMEAVGCTRRLVVQEAGQADAGEYSCKAGDQRLSFHLHVAEPKVVFAKEQPAHREVQAEAGASATLSCEVAQAQTEVTWYKDGKKLSSSSKVRVEAVGCTRRLVVQQAGQAEAGEYSCEAGGQQLSFRLHVAELEPQISERPCRREPLVVKEHEDIILTATLATPSAATVTWLKDGVEIRRSKRHETASQGDTHTLTVHGAQVLDSAIYSCRVGAEGQDFPVQVEEVAAKFCRLLEPVCGELGGTVTLACELSPACAEVVWRCGNTQLRVGKRFQMVAEGPVRSLTVLGLRAEDAGEYVCESRDDHTSAQLTVSVPRVVKFMSGLSTVVAEEGGEATFQCVVSPSDVAVVWFRDGALLQPSEKFAISQSGASHSLTISDLVLEDAGQITVEAEGASSSAALRVREAPVLFKKKLEPQTVEERSSVTLEVELTRPWPELRWTRNATALAPGKNVEIHAEGARHRLVLHNVGFADRGFFGCETPDDKTQAKLTVEMRQVRLVRGLQAVEAREQGTATMEVQLSHADVDGSWTRDGLRFQQGPTCHLAVRGPMHTLTLSGLRPEDSGLMVFKAEGVHTSARLVVTELPVSFSRPLQDVVTTEKEKVTLECELSRPNVDVRWLKDGVELRAGKTMAIAAQGACRSLTIYRCEFADQGVYVCDAHDAQSSASVKVQGRTYTLIYRRVLAEDAGEIQFVAENAESRAQLRVKELPVTLVRPLRDKIAMEKHRGVLECQVSRASAQVRWFKGSQELQPGPKYELVSDGLYRKLIISDVHAEDEDTYTCDAGDVKTSAQFFVEEQSITIVRGLQDVTVMEPAPAWFECETSIPSVRPPKWLLGKTVLQAGGNVGLEQEGTVHRLMLRRTCSTMTGPVHFTVGKSRSSARLVVSDIPVVLTRPLEPKTGRELQSVVLSCDFRPAPKAVQWYKDDTPLSPSEKFKMSLEGQMAELRILRLMPADAGVYRCQAGSAHSSTEVTVEAREVTVTGPLQDAEATEEGWASFSCELSHEDEEVEWSLNGMPLYNDSFHEISHKGRRHTLVLKSIQRADAGIVRASSLKVSTSARLEVRVKPVVFLKALDDLSAEERGTLALQCEVSDPEAHVVWRKDGVQLGPSDKYDFLHTAGTRGLVVHDVSPEDAGLYTCHVGSEETRARVRVHDLHVGITKRLKTMEVLEGESCSFECVLSHESASDPAMWTVGGKTVGSSSRFQATRQGRKYILVVREAAPSDAGEVVFSVRGLTSKASLIVRERPAAIIKPLEDQWVAPGEDVELRCELSRAGTPVHWLKDRKAIRKSQKYDVVCEGTMAMLVIRGASLKDAGEYTCEVEASKSTASLHVEEKANCFTEELTNLQVEEKGTAVFTCKTEHPAATVTWRKGLLELRASGKHQPSQEGLTLRLTISALEKADSDTYTCDIGQAQSRAQLLVQGRRVHIIEDLEDVDVQEGSSATFRCRISPANYEPVHWFLDKTPLHANELNEIDAQPGGYHVLTLRQLALKDSGTIYFEAGDQRASAALRVTEKPSVFSRELTDATITEGEDLTLVCETSTCDIPVCWTKDGKTLRGSARCQLSHEGHRAQLLITGATLQDSGRYKCEAGGACSSSIVRVHARPVRFQEALKDLEVLEGGAATLRCVLSSVAAPVKWCYGNNVLRPGDKYSLRQEGAMLELVVRNLRPQDSGRYSCSFGDQTTSATLTVTALPAQFIGKLRNKEATEGATATLRCELSKAAPVEWRKGSETLRDGDRYCLRQDGAMCELQIRGLAMVDAAEYSCVCGEERTSASLTIRPMPAHFIGRLRHQESIEGATATLRCELSKAAPVEWRKGRESLRDGDRHSLRQDGAVCELQICGLAVADAGEYSCVCGEERTSATLTVKALPAKFTEGLRNEEAVEGATAMLWCELSKVAPVEWRKGPENLRDGDRYILRQEGTRCELQICGLAMADAGEYLCVCGQERTSATLTIRALPARFIEDVKNQEAREGATAVLQCELNSAAPVEWRKGSETLRDGDRYSLRQDGTKCELQIRGLAMADTGEYSCVCGQERTSAMLTVRALPIKFTEGLRNEEATEGATAVLRCELSKMAPVEWWKGHETLRDGDRHSLRQDGARCELQIRGLVAEDAGEYLCMCGKERTSAMLTVRAMPSKFIEGLRNEEATEGDTATLWCELSKAAPVEWRKGHETLRDGDRHSLRQDGSRCELQIRGLAVVDAGEYSCVCGQERTSATLTVRALPARFIEDVKNQEAREGATAVLQCELSKAAPVEWRKGSETLRGGDRYSLRQDGTRCELQIHGLSVADTGEYSCVCGQERTSATLTVKAPQPVFREPLQSLQAEEGSTATLQCELSEPTATVVWSKGGLQLQANGRREPRLQGCTAELVLQDLQREDTGEYTCTCGSQATSATLTVTAAPVRFLRELQHQEVDEGGTAHLCCELSRAGASVEWRKGSLQLFPCAKYQMVQDGAAAELLVRGVEQEDAGDYTCDTGHTQSMASLSVRVPRPKFKTRLQSLEQETGDIARLCCQLSDAESGAVVQWLKEGVELHAGPKYEMRSQGATRELLIHQLEAKDTGEYACVTGGQKTAASLRVTEPEVTIVRGLVDAEVTADEDVEFSCEVSRAGATGVQWCLQGLPLQSNEVTEVAVRDGRIHTLRLKGVTPEDAGTVSFHLGNHASSAQLTVRAPEVTILEPLQDVQLSEGQDASFQCRLSRASGQEARWALGGVPLQANEMNDITVEQGTLHLLTLHKVTLEDAGTVSFHVGTCSSEAQLKVTAKNTVVRGLENVEALEGGEALFECQLSQPEVAAHTWLLDDEPVHTSENAEVVFFENGLRHLLLLKNLRPQDSCRVTFLAGDMVTSAFLTVRGWRLEILEPLKNAAVRAGAQACFTCTLSEAVPVGEASWYINGAAVQPDDSDWTVTADGSHHALLLRSAQPHHAGEVTFACRDAVASARLTVLGLPDPPEDAEVVARSSHTVTLSWAAPMSDGGGGLCGYRVEVKEGATGQWRLCHELVPGPECVVDGLAPGETYRFRVAAVGPVGAGEPVHLPQTVRLAEPPKPVPPQPSAPESRQVAAGEDVSLELEVVAEAGEVIWHKGMERIQPGGRFEVVSQGRQQMLVIKGFTAEDQGEYHCGLAQGSICPAAATFQVALSPASVDEAPQPSLPPEAAQEGDLHLLWEALARKRRMSREPTLDSISELPEEDGRSQRLPQEAEEVAPDLSEGYSTADELARTGDADLSHTSSDDESRAGTPSLVTYLKKAGRPGTSPLASKVGAPAAPSVKPQQQQEPLAAVRPPLGDLSTKDLGDPSMDKAAVKIQAAFKGYKVRKEMKQQEGPMFSHTFGDTEAQVGDALRLECVVASKADVRARWLKDGVELTDGRHHHIDQLGDGTCSLLITGLDRADAGCYTCQVSNKFGQVTHSACVVVSGSESEAESSSGGELDDAFRRAARRLHRLFRTKSPAEVSDEELFLSADEGPAEPEEPADWQTYREDEHFICIRFEALTEARQAVTRFQEMFATLGIGVEIKLVEQGPRRVEMCISKETPAPVVPPEPLPSLLTSDAAPVFLTELQNQEVQDGYPVSFDCVVTGQPMPSVRWFKDGKLLEEDDHYMINEDQQGGHQLIITAVVPADMGVYRCLAENSMGVSSTKAELRVDLTSTDYDTAADATESSSYFSAQGYLSSREQEGTESTTDEGQLPQVVEELRDLQVAPGTRLAKFQLKVKGYPAPRLYWFKDGQPLTASAHIRMTDKKILHTLEIISVTREDSGQYAAYISNAMGAAYSSARLLVRGPDEPEEKPASDVHEQLVPPRMLERFTPKKVKKGSSITFSVKVEGRPVPTVHWLREEAERGVLWIGPDTPGYTVASSAQQHSLVLLDVGRQHQGTYTCIASNAAGQALCSASLHVSGLPKVEEQEKVKEALISTFLQGTTQAISAQGLETASFADLGGQRKEEPLAAKEALGHLSLAEVGTEEFLQKLTSQITEMVSAKITQAKLQVPGGDSDEDSKTPSASPRHGRSRPSSSIQESSSESEDGDARGEIFDIYVVTADYLPLGAEQDAITLREGQYVEVLDAAHPLRWLVRTKPTKSSPSRQGWVSPAYLDRRLKLSPEWGAAEAPEFPGEAVSEDEYKARLSSVIQELLSSEQAFVEELQFLQSHHLQHLERCPHVPIAVAGQKAVIFRNVRDIGRFHSSFLQELQQCDTDDDVAMCFIKNQAAFEQYLEFLVGRVQAESVVVSTAIQEFYKKYAEEALLAGDPSQPPPPPLQHYLEQPVERVQRYQALLKELIRNKARNRQNCALLEQAYAVVSALPQRAENKLHVSLMENYPGTLQALGEPIRQGHFIVWEGAPGARMPWKGHNRHVFLFRNHLVICKPRRDSRTDTVSYVFRNMMKLSSIDLNDQVEGDDRAFEVWQEREDSVRKYLLQARTAIIKSSWVKEICGIQQRLALPVWRPPDFEEELADCTAELGETVKLACRVTGTPKPVISWYKDGKAVQVDPHHILIEDPDGSCALILDSLTGVDSGQYMCFAASAAGNCSTLGKILVQVPPRFVNKVRASPFVEGEDAQFTCTIEGAPYPQIRWYKDGALLTTGNKFQTLSEPRSGLLVLVIRAASKEDLGLYECELVNRLGSARASAELRIQSPMLQAQEQCHREQLVAAVEDTTLERADQEVTSVLKRLLGPKAPGPSTGDLTGPGPCPRGAPALQETGSQPPVTGTSEAPAVPPRVPQPLLHEGPEQEPEAIARAQEWTVPIRMEGAAWPGAGTGELLWDVHSHVVRETTQRTYTYQAIDTHTARPPSMQVTIEDVQAQTGGTAQFEAIIEGDPQPSVTWYKDSVQLVDSTRLSQQQEGTTYSLVLRHVASKDAGVYTCLAQNTGGQVLCKAELLVLGGDNEPDSEKQSHRRKLHSFYEVKEEIGRGVFGFVKRVQHKGNKILCAAKFIPLRSRTRAQAYRERDILAALSHPLVTGLLDQFETRKTLILILELCSSEELLDRLYRKGVVTEAEVKVYIQQLVEGLHYLHSHGVLHLDIKPSNILMVHPAREDIKICDFGFAQNITPAELQFSQYGSPEFVSPEIIQQNPVSEASDIWAMGVISYLSLTCSSPFAGESDRATLLNVLEGRVSWSSPMAAHLSEDAKDFIKATLQRAPQARPSAAQCLSHPWFLKSMPAEEAHFINTKQLKFLLARSRWQRSLMSYKSILVMRSIPELLRGPPDSPSLGVARHLCRDTGGSSSSSSSSDNELAPFARAKSLPPSPVTHSPLLHPRGFLRPSASLPEEAEASERSTEAPAPPASPEGAGPPAAQGCVPRHSVIRSLFYHQAGESPEHGALAPGSRRHPARRRHLLKGGYIAGALPGLREPLMEHRVLEEEAAREEQATLLAKAPSFETALRLPASGTHLAPGHSHSLEHDSPSTPRPSSEACGEAQRLPSAPSGGAPIRDMGHPQGSKQLPSTGGHPGTAQPERPSPDSPWGQPAPFCHPKQGSAPQEGCSPHPAVAPCPPGSFPPGSCKEAPLVPSSPFLGQPQAPPAPAKASPPLDSKMGPGDISLPGRPKPGPCSSPGSASQASSSQVSSLRVGSSQVGTEPGPSLDAEGWTQEAEDLSDSTPTLQRPQEQATMRKFSLGGRGGYAGVAGYGTFAFGGDAGGMLGQGPMWARIAWAVSQSEEEEQEEARAESQSEEQQEARAESPLPQVSARPVPEVGRAPTRSSPEPTPWEDIGQVSLVQIRDLSGDAEAADTISLDISEVDPAYLNLSDLYDIKYLPFEFMIFRKVPKSAQPEPPSPMAEEELAEFPEPTWPWPGELGPHAGLEITEESEDVDALLAEAAVGRKRKWSSPSRSLFHFPGRHLPLDEPAELGLRERVKASVEHISRILKGRPEGLEKEGPPRKKPGLASFRLSGLKSWDRAPTFLRELSDETVVLGQSVTLACQVSAQPAAQATWSKDGAPLESSSRVLISATLKNFQLLTILVVVAEDLGVYTCSVSNALGTVTTTGVLRKAERPSSSPCPDIGEVYADGVLLVWKPVESYGPVTYIVQCSLEGGSWTTLASDIFDCCYLTSKLSRGGTYTFRTACVSKAGMGPYSSPSEQVLLGGPSHLASEEESQGRSAQPLPSTKTFAFQTQIQRGRFSVVRQCWEKASGRALAAKIIPYHPKDKTAVLREYEALKGLRHPHLAQLHAAYLSPRHLVLILELCSGPELLPCLAERASYSESEVKDYLWQMLSATQYLHNQHILHLDLRSENMIITEYNLLKVVDLGNAQSLSQEKVLPSDKFKDYLETMAPELLEGQGAVPQTDIWAIGVTAFIMLSAEYPVSSEGARDLQRGLRKGLVRLSRCYAGLSGGAVAFLRSTLCAQPWGRPCASSCLQCPWLTEEGPACSRPAPVTFPTARLRVFVRNREKRRALLYKRHNLAQVR</sequence>
<name>OBSCN_HUMAN</name>
<keyword id="KW-0002">3D-structure</keyword>
<keyword id="KW-0025">Alternative splicing</keyword>
<keyword id="KW-0067">ATP-binding</keyword>
<keyword id="KW-0112">Calmodulin-binding</keyword>
<keyword id="KW-1003">Cell membrane</keyword>
<keyword id="KW-0160">Chromosomal rearrangement</keyword>
<keyword id="KW-0963">Cytoplasm</keyword>
<keyword id="KW-0217">Developmental protein</keyword>
<keyword id="KW-0221">Differentiation</keyword>
<keyword id="KW-0225">Disease variant</keyword>
<keyword id="KW-1015">Disulfide bond</keyword>
<keyword id="KW-0393">Immunoglobulin domain</keyword>
<keyword id="KW-0418">Kinase</keyword>
<keyword id="KW-0446">Lipid-binding</keyword>
<keyword id="KW-0460">Magnesium</keyword>
<keyword id="KW-0472">Membrane</keyword>
<keyword id="KW-0479">Metal-binding</keyword>
<keyword id="KW-0514">Muscle protein</keyword>
<keyword id="KW-0547">Nucleotide-binding</keyword>
<keyword id="KW-0539">Nucleus</keyword>
<keyword id="KW-0597">Phosphoprotein</keyword>
<keyword id="KW-1267">Proteomics identification</keyword>
<keyword id="KW-1185">Reference proteome</keyword>
<keyword id="KW-0677">Repeat</keyword>
<keyword id="KW-0723">Serine/threonine-protein kinase</keyword>
<keyword id="KW-0728">SH3 domain</keyword>
<keyword id="KW-0808">Transferase</keyword>
<reference key="1">
    <citation type="journal article" date="2001" name="J. Cell Biol.">
        <title>Obscurin, a giant sarcomeric Rho guanine nucleotide exchange factor protein involved in sarcomere assembly.</title>
        <authorList>
            <person name="Young P.W."/>
            <person name="Ehler E."/>
            <person name="Gautel M."/>
        </authorList>
    </citation>
    <scope>NUCLEOTIDE SEQUENCE [GENOMIC DNA / MRNA] (ISOFORM 3)</scope>
    <scope>VARIANTS THR-51; ARG-502; ASP-1508; THR-3300; ARG-4381; ARG-4450 AND HIS-4534</scope>
    <scope>FUNCTION</scope>
    <scope>INTERACTION WITH TTN AND CALMODULIN</scope>
    <source>
        <tissue>Heart</tissue>
    </source>
</reference>
<reference key="2">
    <citation type="journal article" date="2006" name="Nature">
        <title>The DNA sequence and biological annotation of human chromosome 1.</title>
        <authorList>
            <person name="Gregory S.G."/>
            <person name="Barlow K.F."/>
            <person name="McLay K.E."/>
            <person name="Kaul R."/>
            <person name="Swarbreck D."/>
            <person name="Dunham A."/>
            <person name="Scott C.E."/>
            <person name="Howe K.L."/>
            <person name="Woodfine K."/>
            <person name="Spencer C.C.A."/>
            <person name="Jones M.C."/>
            <person name="Gillson C."/>
            <person name="Searle S."/>
            <person name="Zhou Y."/>
            <person name="Kokocinski F."/>
            <person name="McDonald L."/>
            <person name="Evans R."/>
            <person name="Phillips K."/>
            <person name="Atkinson A."/>
            <person name="Cooper R."/>
            <person name="Jones C."/>
            <person name="Hall R.E."/>
            <person name="Andrews T.D."/>
            <person name="Lloyd C."/>
            <person name="Ainscough R."/>
            <person name="Almeida J.P."/>
            <person name="Ambrose K.D."/>
            <person name="Anderson F."/>
            <person name="Andrew R.W."/>
            <person name="Ashwell R.I.S."/>
            <person name="Aubin K."/>
            <person name="Babbage A.K."/>
            <person name="Bagguley C.L."/>
            <person name="Bailey J."/>
            <person name="Beasley H."/>
            <person name="Bethel G."/>
            <person name="Bird C.P."/>
            <person name="Bray-Allen S."/>
            <person name="Brown J.Y."/>
            <person name="Brown A.J."/>
            <person name="Buckley D."/>
            <person name="Burton J."/>
            <person name="Bye J."/>
            <person name="Carder C."/>
            <person name="Chapman J.C."/>
            <person name="Clark S.Y."/>
            <person name="Clarke G."/>
            <person name="Clee C."/>
            <person name="Cobley V."/>
            <person name="Collier R.E."/>
            <person name="Corby N."/>
            <person name="Coville G.J."/>
            <person name="Davies J."/>
            <person name="Deadman R."/>
            <person name="Dunn M."/>
            <person name="Earthrowl M."/>
            <person name="Ellington A.G."/>
            <person name="Errington H."/>
            <person name="Frankish A."/>
            <person name="Frankland J."/>
            <person name="French L."/>
            <person name="Garner P."/>
            <person name="Garnett J."/>
            <person name="Gay L."/>
            <person name="Ghori M.R.J."/>
            <person name="Gibson R."/>
            <person name="Gilby L.M."/>
            <person name="Gillett W."/>
            <person name="Glithero R.J."/>
            <person name="Grafham D.V."/>
            <person name="Griffiths C."/>
            <person name="Griffiths-Jones S."/>
            <person name="Grocock R."/>
            <person name="Hammond S."/>
            <person name="Harrison E.S.I."/>
            <person name="Hart E."/>
            <person name="Haugen E."/>
            <person name="Heath P.D."/>
            <person name="Holmes S."/>
            <person name="Holt K."/>
            <person name="Howden P.J."/>
            <person name="Hunt A.R."/>
            <person name="Hunt S.E."/>
            <person name="Hunter G."/>
            <person name="Isherwood J."/>
            <person name="James R."/>
            <person name="Johnson C."/>
            <person name="Johnson D."/>
            <person name="Joy A."/>
            <person name="Kay M."/>
            <person name="Kershaw J.K."/>
            <person name="Kibukawa M."/>
            <person name="Kimberley A.M."/>
            <person name="King A."/>
            <person name="Knights A.J."/>
            <person name="Lad H."/>
            <person name="Laird G."/>
            <person name="Lawlor S."/>
            <person name="Leongamornlert D.A."/>
            <person name="Lloyd D.M."/>
            <person name="Loveland J."/>
            <person name="Lovell J."/>
            <person name="Lush M.J."/>
            <person name="Lyne R."/>
            <person name="Martin S."/>
            <person name="Mashreghi-Mohammadi M."/>
            <person name="Matthews L."/>
            <person name="Matthews N.S.W."/>
            <person name="McLaren S."/>
            <person name="Milne S."/>
            <person name="Mistry S."/>
            <person name="Moore M.J.F."/>
            <person name="Nickerson T."/>
            <person name="O'Dell C.N."/>
            <person name="Oliver K."/>
            <person name="Palmeiri A."/>
            <person name="Palmer S.A."/>
            <person name="Parker A."/>
            <person name="Patel D."/>
            <person name="Pearce A.V."/>
            <person name="Peck A.I."/>
            <person name="Pelan S."/>
            <person name="Phelps K."/>
            <person name="Phillimore B.J."/>
            <person name="Plumb R."/>
            <person name="Rajan J."/>
            <person name="Raymond C."/>
            <person name="Rouse G."/>
            <person name="Saenphimmachak C."/>
            <person name="Sehra H.K."/>
            <person name="Sheridan E."/>
            <person name="Shownkeen R."/>
            <person name="Sims S."/>
            <person name="Skuce C.D."/>
            <person name="Smith M."/>
            <person name="Steward C."/>
            <person name="Subramanian S."/>
            <person name="Sycamore N."/>
            <person name="Tracey A."/>
            <person name="Tromans A."/>
            <person name="Van Helmond Z."/>
            <person name="Wall M."/>
            <person name="Wallis J.M."/>
            <person name="White S."/>
            <person name="Whitehead S.L."/>
            <person name="Wilkinson J.E."/>
            <person name="Willey D.L."/>
            <person name="Williams H."/>
            <person name="Wilming L."/>
            <person name="Wray P.W."/>
            <person name="Wu Z."/>
            <person name="Coulson A."/>
            <person name="Vaudin M."/>
            <person name="Sulston J.E."/>
            <person name="Durbin R.M."/>
            <person name="Hubbard T."/>
            <person name="Wooster R."/>
            <person name="Dunham I."/>
            <person name="Carter N.P."/>
            <person name="McVean G."/>
            <person name="Ross M.T."/>
            <person name="Harrow J."/>
            <person name="Olson M.V."/>
            <person name="Beck S."/>
            <person name="Rogers J."/>
            <person name="Bentley D.R."/>
        </authorList>
    </citation>
    <scope>NUCLEOTIDE SEQUENCE [LARGE SCALE GENOMIC DNA]</scope>
</reference>
<reference key="3">
    <citation type="journal article" date="2005" name="J. Muscle Res. Cell Motil.">
        <title>Complete human gene structure of obscurin: implications for isoform generation by differential splicing.</title>
        <authorList>
            <person name="Fukuzawa A."/>
            <person name="Idowu S."/>
            <person name="Gautel M."/>
        </authorList>
    </citation>
    <scope>NUCLEOTIDE SEQUENCE [GENOMIC DNA] OF 2734-4428 (ISOFORM 5)</scope>
    <scope>NUCLEOTIDE SEQUENCE [MRNA] OF 6009-7968 (ISOFORM 1)</scope>
    <source>
        <tissue>Cardiac myocyte</tissue>
    </source>
</reference>
<reference key="4">
    <citation type="journal article" date="2000" name="DNA Res.">
        <title>Prediction of the coding sequences of unidentified human genes. XVIII. The complete sequences of 100 new cDNA clones from brain which code for large proteins in vitro.</title>
        <authorList>
            <person name="Nagase T."/>
            <person name="Kikuno R."/>
            <person name="Nakayama M."/>
            <person name="Hirosawa M."/>
            <person name="Ohara O."/>
        </authorList>
    </citation>
    <scope>NUCLEOTIDE SEQUENCE [LARGE SCALE MRNA] OF 5386-7968 (ISOFORM 2)</scope>
    <scope>VARIANT VAL-7172</scope>
    <source>
        <tissue>Brain</tissue>
    </source>
</reference>
<reference key="5">
    <citation type="journal article" date="2001" name="Circ. Res.">
        <title>The complete gene sequence of titin, expression of an unusual ~700 kDa titin isoform and its interaction with obscurin identify a novel Z-line to I-band linking system.</title>
        <authorList>
            <person name="Bang M.-L."/>
            <person name="Centner T."/>
            <person name="Fornoff F."/>
            <person name="Geach A.J."/>
            <person name="Gotthardt M."/>
            <person name="McNabb M."/>
            <person name="Witt C.C."/>
            <person name="Labeit D."/>
            <person name="Gregorio C.C."/>
            <person name="Granzier H."/>
            <person name="Labeit S."/>
        </authorList>
    </citation>
    <scope>INTERACTION WITH TTN</scope>
</reference>
<reference key="6">
    <citation type="journal article" date="2002" name="Gene">
        <title>Identification, tissue expression and chromosomal localization of human obscurin-MLCK, a member of the titin and Dbl families of myosin light chain kinases.</title>
        <authorList>
            <person name="Russell M.W."/>
            <person name="Raeker M.O."/>
            <person name="Korytkowski K.A."/>
            <person name="Sonneman K.J."/>
        </authorList>
    </citation>
    <scope>ALTERNATIVE SPLICING</scope>
    <scope>TISSUE SPECIFICITY</scope>
</reference>
<reference key="7">
    <citation type="journal article" date="2003" name="J. Cell Biol.">
        <title>Binding of an ankyrin-1 isoform to obscurin suggests a molecular link between the sarcoplasmic reticulum and myofibrils in striated muscles.</title>
        <authorList>
            <person name="Bagnato P."/>
            <person name="Barone V."/>
            <person name="Giacomello E."/>
            <person name="Rossi D."/>
            <person name="Sorrentino V."/>
        </authorList>
    </citation>
    <scope>SUBCELLULAR LOCATION</scope>
    <scope>INTERACTION WITH ANK1</scope>
</reference>
<reference key="8">
    <citation type="journal article" date="2003" name="Oncogene">
        <title>The parathyroid hormone-responsive B1 gene is interrupted by a t(1;7)(q42;p15) breakpoint associated with Wilms' tumour.</title>
        <authorList>
            <person name="Vernon E.G."/>
            <person name="Malik K."/>
            <person name="Reynolds P."/>
            <person name="Powlesland R."/>
            <person name="Dallosso A.R."/>
            <person name="Jackson S."/>
            <person name="Henthorn K."/>
            <person name="Green E.D."/>
            <person name="Brown K.W."/>
        </authorList>
    </citation>
    <scope>CHROMOSOMAL TRANSLOCATION WITH PTHB1</scope>
</reference>
<reference key="9">
    <citation type="journal article" date="2006" name="Histochem. Cell Biol.">
        <title>Essential role of obscurin in cardiac myofibrillogenesis and hypertrophic response: evidence from small interfering RNA-mediated gene silencing.</title>
        <authorList>
            <person name="Borisov A.B."/>
            <person name="Sutter S.B."/>
            <person name="Kontrogianni-Konstantopoulos A."/>
            <person name="Bloch R.J."/>
            <person name="Westfall M.V."/>
            <person name="Russell M.W."/>
        </authorList>
    </citation>
    <scope>FUNCTION</scope>
</reference>
<reference key="10">
    <citation type="journal article" date="2013" name="J. Proteome Res.">
        <title>Toward a comprehensive characterization of a human cancer cell phosphoproteome.</title>
        <authorList>
            <person name="Zhou H."/>
            <person name="Di Palma S."/>
            <person name="Preisinger C."/>
            <person name="Peng M."/>
            <person name="Polat A.N."/>
            <person name="Heck A.J."/>
            <person name="Mohammed S."/>
        </authorList>
    </citation>
    <scope>PHOSPHORYLATION [LARGE SCALE ANALYSIS] AT SER-6831 AND SER-7244</scope>
    <scope>IDENTIFICATION BY MASS SPECTROMETRY [LARGE SCALE ANALYSIS]</scope>
    <source>
        <tissue>Erythroleukemia</tissue>
    </source>
</reference>
<reference key="11">
    <citation type="journal article" date="2017" name="J. Mol. Cell. Cardiol.">
        <title>Novel obscurins mediate cardiomyocyte adhesion and size via the PI3K/AKT/mTOR signaling pathway.</title>
        <authorList>
            <person name="Ackermann M.A."/>
            <person name="King B."/>
            <person name="Lieberman N.A.P."/>
            <person name="Bobbili P.J."/>
            <person name="Rudloff M."/>
            <person name="Berndsen C.E."/>
            <person name="Wright N.T."/>
            <person name="Hecker P.A."/>
            <person name="Kontrogianni-Konstantopoulos A."/>
        </authorList>
    </citation>
    <scope>PHOSPHATIDYLINOSITOL-PHOSPHATE-BINDING</scope>
    <scope>MUTAGENESIS OF ARG-5975 AND ARG-5980</scope>
</reference>
<reference key="12">
    <citation type="submission" date="2007-08" db="PDB data bank">
        <title>Solution structure of the Ig domains of human obscurin.</title>
        <authorList>
            <consortium name="RIKEN structural genomics initiative (RSGI)"/>
        </authorList>
    </citation>
    <scope>STRUCTURE BY NMR OF 2826-3806</scope>
</reference>
<reference key="13">
    <citation type="submission" date="2005-04" db="PDB data bank">
        <title>Solution structure of the SH3 domain of obscurin.</title>
        <authorList>
            <person name="Pfuhl M."/>
            <person name="Gautel M."/>
        </authorList>
    </citation>
    <scope>STRUCTURE BY NMR OF 5601-5668</scope>
</reference>
<reference key="14">
    <citation type="journal article" date="2006" name="Science">
        <title>The consensus coding sequences of human breast and colorectal cancers.</title>
        <authorList>
            <person name="Sjoeblom T."/>
            <person name="Jones S."/>
            <person name="Wood L.D."/>
            <person name="Parsons D.W."/>
            <person name="Lin J."/>
            <person name="Barber T.D."/>
            <person name="Mandelker D."/>
            <person name="Leary R.J."/>
            <person name="Ptak J."/>
            <person name="Silliman N."/>
            <person name="Szabo S."/>
            <person name="Buckhaults P."/>
            <person name="Farrell C."/>
            <person name="Meeh P."/>
            <person name="Markowitz S.D."/>
            <person name="Willis J."/>
            <person name="Dawson D."/>
            <person name="Willson J.K.V."/>
            <person name="Gazdar A.F."/>
            <person name="Hartigan J."/>
            <person name="Wu L."/>
            <person name="Liu C."/>
            <person name="Parmigiani G."/>
            <person name="Park B.H."/>
            <person name="Bachman K.E."/>
            <person name="Papadopoulos N."/>
            <person name="Vogelstein B."/>
            <person name="Kinzler K.W."/>
            <person name="Velculescu V.E."/>
        </authorList>
    </citation>
    <scope>VARIANTS [LARGE SCALE ANALYSIS] VAL-1136; HIS-1792; MET-1930; LYS-2090; PHE-2314; GLN-3983; HIS-4558; GLN-4810 AND THR-5071</scope>
</reference>
<reference key="15">
    <citation type="journal article" date="2007" name="Nature">
        <title>Patterns of somatic mutation in human cancer genomes.</title>
        <authorList>
            <person name="Greenman C."/>
            <person name="Stephens P."/>
            <person name="Smith R."/>
            <person name="Dalgliesh G.L."/>
            <person name="Hunter C."/>
            <person name="Bignell G."/>
            <person name="Davies H."/>
            <person name="Teague J."/>
            <person name="Butler A."/>
            <person name="Stevens C."/>
            <person name="Edkins S."/>
            <person name="O'Meara S."/>
            <person name="Vastrik I."/>
            <person name="Schmidt E.E."/>
            <person name="Avis T."/>
            <person name="Barthorpe S."/>
            <person name="Bhamra G."/>
            <person name="Buck G."/>
            <person name="Choudhury B."/>
            <person name="Clements J."/>
            <person name="Cole J."/>
            <person name="Dicks E."/>
            <person name="Forbes S."/>
            <person name="Gray K."/>
            <person name="Halliday K."/>
            <person name="Harrison R."/>
            <person name="Hills K."/>
            <person name="Hinton J."/>
            <person name="Jenkinson A."/>
            <person name="Jones D."/>
            <person name="Menzies A."/>
            <person name="Mironenko T."/>
            <person name="Perry J."/>
            <person name="Raine K."/>
            <person name="Richardson D."/>
            <person name="Shepherd R."/>
            <person name="Small A."/>
            <person name="Tofts C."/>
            <person name="Varian J."/>
            <person name="Webb T."/>
            <person name="West S."/>
            <person name="Widaa S."/>
            <person name="Yates A."/>
            <person name="Cahill D.P."/>
            <person name="Louis D.N."/>
            <person name="Goldstraw P."/>
            <person name="Nicholson A.G."/>
            <person name="Brasseur F."/>
            <person name="Looijenga L."/>
            <person name="Weber B.L."/>
            <person name="Chiew Y.-E."/>
            <person name="DeFazio A."/>
            <person name="Greaves M.F."/>
            <person name="Green A.R."/>
            <person name="Campbell P."/>
            <person name="Birney E."/>
            <person name="Easton D.F."/>
            <person name="Chenevix-Trench G."/>
            <person name="Tan M.-H."/>
            <person name="Khoo S.K."/>
            <person name="Teh B.T."/>
            <person name="Yuen S.T."/>
            <person name="Leung S.Y."/>
            <person name="Wooster R."/>
            <person name="Futreal P.A."/>
            <person name="Stratton M.R."/>
        </authorList>
    </citation>
    <scope>VARIANTS [LARGE SCALE ANALYSIS] ARG-502; SER-804; ARG-1027; SER-1086; THR-1090; THR-1091; PRO-1101; ARG-1121; VAL-1133; VAL-1136; GLN-1156; HIS-1248; VAL-1532; MET-1566; THR-1601; VAL-3389; GLU-3426; GLY-3834; SER-4823; GLN-5598 AND GLN-6473</scope>
</reference>
<reference key="16">
    <citation type="journal article" date="2014" name="Circ. Cardiovasc. Genet.">
        <title>Novel alpha-actinin 2 variant associated with familial hypertrophic cardiomyopathy and juvenile atrial arrhythmias: a massively parallel sequencing study.</title>
        <authorList>
            <person name="Girolami F."/>
            <person name="Iascone M."/>
            <person name="Tomberli B."/>
            <person name="Bardi S."/>
            <person name="Benelli M."/>
            <person name="Marseglia G."/>
            <person name="Pescucci C."/>
            <person name="Pezzoli L."/>
            <person name="Sana M.E."/>
            <person name="Basso C."/>
            <person name="Marziliano N."/>
            <person name="Merlini P.A."/>
            <person name="Fornaro A."/>
            <person name="Cecchi F."/>
            <person name="Torricelli F."/>
            <person name="Olivotto I."/>
        </authorList>
    </citation>
    <scope>VARIANT ARG-4492</scope>
</reference>
<reference key="17">
    <citation type="journal article" date="2022" name="Brain">
        <title>Bi-allelic loss-of-function OBSCN variants predispose individuals to severe recurrent rhabdomyolysis.</title>
        <authorList>
            <person name="Cabrera-Serrano M."/>
            <person name="Caccavelli L."/>
            <person name="Savarese M."/>
            <person name="Vihola A."/>
            <person name="Jokela M."/>
            <person name="Johari M."/>
            <person name="Capiod T."/>
            <person name="Madrange M."/>
            <person name="Bugiardini E."/>
            <person name="Brady S."/>
            <person name="Quinlivan R."/>
            <person name="Merve A."/>
            <person name="Scalco R."/>
            <person name="Hilton-Jones D."/>
            <person name="Houlden H."/>
            <person name="Aydin H.I."/>
            <person name="Ceylaner S."/>
            <person name="Drewes S."/>
            <person name="Vockley J."/>
            <person name="Taylor R.L."/>
            <person name="Folland C."/>
            <person name="Kelly A."/>
            <person name="Goullee H."/>
            <person name="Ylikallio E."/>
            <person name="Auranen M."/>
            <person name="Tyynismaa H."/>
            <person name="Udd B."/>
            <person name="Forrest A.R.R."/>
            <person name="Davis M.R."/>
            <person name="Bratkovic D."/>
            <person name="Manton N."/>
            <person name="Robertson T."/>
            <person name="O'Gorman C."/>
            <person name="McCombe P."/>
            <person name="Laing N.G."/>
            <person name="Phillips L."/>
            <person name="de Lonlay P."/>
            <person name="Ravenscroft G."/>
        </authorList>
    </citation>
    <scope>VARIANTS RHABDO1 2322-TRP--ARG-7968 DEL; 3279-LYS--ARG-7968 DEL; 3983-ARG--ARG-7968 DEL AND 4453-CYS--ARG-7968 DEL</scope>
    <scope>INVOLVEMENT IN RHABDO1</scope>
</reference>
<gene>
    <name type="primary">OBSCN</name>
    <name type="synonym">KIAA1556</name>
    <name type="synonym">KIAA1639</name>
</gene>
<accession>Q5VST9</accession>
<accession>A0A7P0Z489</accession>
<accession>Q2A664</accession>
<accession>Q5T7G8</accession>
<accession>Q5T7G9</accession>
<accession>Q5VSU2</accession>
<accession>Q86YC7</accession>
<accession>Q8NHN0</accession>
<accession>Q8NHN1</accession>
<accession>Q8NHN2</accession>
<accession>Q8NHN3</accession>
<accession>Q8NHN4</accession>
<accession>Q8NHN5</accession>
<accession>Q8NHN6</accession>
<accession>Q8NHN7</accession>
<accession>Q8NHN8</accession>
<accession>Q8NHN9</accession>
<accession>Q96AA2</accession>
<accession>Q9HCD3</accession>
<accession>Q9HCL6</accession>
<protein>
    <recommendedName>
        <fullName>Obscurin</fullName>
        <ecNumber evidence="2">2.7.11.1</ecNumber>
    </recommendedName>
    <alternativeName>
        <fullName>Obscurin-RhoGEF</fullName>
    </alternativeName>
    <alternativeName>
        <fullName>Obscurin-myosin light chain kinase</fullName>
        <shortName>Obscurin-MLCK</shortName>
    </alternativeName>
</protein>
<organism>
    <name type="scientific">Homo sapiens</name>
    <name type="common">Human</name>
    <dbReference type="NCBI Taxonomy" id="9606"/>
    <lineage>
        <taxon>Eukaryota</taxon>
        <taxon>Metazoa</taxon>
        <taxon>Chordata</taxon>
        <taxon>Craniata</taxon>
        <taxon>Vertebrata</taxon>
        <taxon>Euteleostomi</taxon>
        <taxon>Mammalia</taxon>
        <taxon>Eutheria</taxon>
        <taxon>Euarchontoglires</taxon>
        <taxon>Primates</taxon>
        <taxon>Haplorrhini</taxon>
        <taxon>Catarrhini</taxon>
        <taxon>Hominidae</taxon>
        <taxon>Homo</taxon>
    </lineage>
</organism>
<dbReference type="EC" id="2.7.11.1" evidence="2"/>
<dbReference type="EMBL" id="AJ002535">
    <property type="protein sequence ID" value="CAC44768.1"/>
    <property type="molecule type" value="mRNA"/>
</dbReference>
<dbReference type="EMBL" id="AJ314896">
    <property type="protein sequence ID" value="CAC85745.1"/>
    <property type="molecule type" value="Genomic_DNA"/>
</dbReference>
<dbReference type="EMBL" id="AJ314898">
    <property type="protein sequence ID" value="CAC85746.1"/>
    <property type="status" value="ALT_SEQ"/>
    <property type="molecule type" value="Genomic_DNA"/>
</dbReference>
<dbReference type="EMBL" id="AJ314900">
    <property type="protein sequence ID" value="CAC85747.1"/>
    <property type="molecule type" value="Genomic_DNA"/>
</dbReference>
<dbReference type="EMBL" id="AJ314901">
    <property type="protein sequence ID" value="CAC85749.1"/>
    <property type="status" value="ALT_SEQ"/>
    <property type="molecule type" value="Genomic_DNA"/>
</dbReference>
<dbReference type="EMBL" id="AJ314903">
    <property type="protein sequence ID" value="CAC85750.1"/>
    <property type="status" value="ALT_SEQ"/>
    <property type="molecule type" value="Genomic_DNA"/>
</dbReference>
<dbReference type="EMBL" id="AJ314904">
    <property type="protein sequence ID" value="CAC85751.1"/>
    <property type="molecule type" value="Genomic_DNA"/>
</dbReference>
<dbReference type="EMBL" id="AJ314905">
    <property type="protein sequence ID" value="CAC85752.1"/>
    <property type="molecule type" value="Genomic_DNA"/>
</dbReference>
<dbReference type="EMBL" id="AJ314906">
    <property type="protein sequence ID" value="CAC85753.1"/>
    <property type="molecule type" value="Genomic_DNA"/>
</dbReference>
<dbReference type="EMBL" id="AJ314907">
    <property type="protein sequence ID" value="CAC85754.1"/>
    <property type="molecule type" value="Genomic_DNA"/>
</dbReference>
<dbReference type="EMBL" id="AJ314908">
    <property type="protein sequence ID" value="CAC85755.1"/>
    <property type="molecule type" value="Genomic_DNA"/>
</dbReference>
<dbReference type="EMBL" id="AL353593">
    <property type="status" value="NOT_ANNOTATED_CDS"/>
    <property type="molecule type" value="Genomic_DNA"/>
</dbReference>
<dbReference type="EMBL" id="AL359510">
    <property type="status" value="NOT_ANNOTATED_CDS"/>
    <property type="molecule type" value="Genomic_DNA"/>
</dbReference>
<dbReference type="EMBL" id="AL670729">
    <property type="status" value="NOT_ANNOTATED_CDS"/>
    <property type="molecule type" value="Genomic_DNA"/>
</dbReference>
<dbReference type="EMBL" id="AM231061">
    <property type="protein sequence ID" value="CAJ76912.1"/>
    <property type="molecule type" value="mRNA"/>
</dbReference>
<dbReference type="EMBL" id="AB046776">
    <property type="protein sequence ID" value="BAB13382.1"/>
    <property type="status" value="ALT_SEQ"/>
    <property type="molecule type" value="mRNA"/>
</dbReference>
<dbReference type="EMBL" id="AB046859">
    <property type="protein sequence ID" value="BAB13465.2"/>
    <property type="molecule type" value="mRNA"/>
</dbReference>
<dbReference type="CCDS" id="CCDS1570.2">
    <molecule id="Q5VST9-3"/>
</dbReference>
<dbReference type="CCDS" id="CCDS58065.1">
    <molecule id="Q5VST9-1"/>
</dbReference>
<dbReference type="CCDS" id="CCDS91171.1">
    <molecule id="Q5VST9-7"/>
</dbReference>
<dbReference type="RefSeq" id="NP_001373054.1">
    <molecule id="Q5VST9-7"/>
    <property type="nucleotide sequence ID" value="NM_001386125.1"/>
</dbReference>
<dbReference type="PDB" id="1V1C">
    <property type="method" value="NMR"/>
    <property type="chains" value="A=5601-5668"/>
</dbReference>
<dbReference type="PDB" id="2CR6">
    <property type="method" value="NMR"/>
    <property type="chains" value="A=2999-3100"/>
</dbReference>
<dbReference type="PDB" id="2DKU">
    <property type="method" value="NMR"/>
    <property type="chains" value="A=2915-3004"/>
</dbReference>
<dbReference type="PDB" id="2DM7">
    <property type="method" value="NMR"/>
    <property type="chains" value="A=3551-3631"/>
</dbReference>
<dbReference type="PDB" id="2E7B">
    <property type="method" value="NMR"/>
    <property type="chains" value="A=3184-3273"/>
</dbReference>
<dbReference type="PDB" id="2EDF">
    <property type="method" value="NMR"/>
    <property type="chains" value="A=2826-2915"/>
</dbReference>
<dbReference type="PDB" id="2EDH">
    <property type="method" value="NMR"/>
    <property type="chains" value="A=3614-3713"/>
</dbReference>
<dbReference type="PDB" id="2EDL">
    <property type="method" value="NMR"/>
    <property type="chains" value="A=3801-3887"/>
</dbReference>
<dbReference type="PDB" id="2EDQ">
    <property type="method" value="NMR"/>
    <property type="chains" value="A=3713-3806"/>
</dbReference>
<dbReference type="PDB" id="2EDR">
    <property type="method" value="NMR"/>
    <property type="chains" value="A=3361-3449"/>
</dbReference>
<dbReference type="PDB" id="2EDT">
    <property type="method" value="NMR"/>
    <property type="chains" value="A=3449-3537"/>
</dbReference>
<dbReference type="PDB" id="2EDW">
    <property type="method" value="NMR"/>
    <property type="chains" value="A=3537-3630"/>
</dbReference>
<dbReference type="PDB" id="2ENY">
    <property type="method" value="NMR"/>
    <property type="chains" value="A=2735-2825"/>
</dbReference>
<dbReference type="PDB" id="2EO1">
    <property type="method" value="NMR"/>
    <property type="chains" value="A=1623-1712"/>
</dbReference>
<dbReference type="PDB" id="2GQH">
    <property type="method" value="NMR"/>
    <property type="chains" value="A=3450-3543"/>
</dbReference>
<dbReference type="PDB" id="2MWC">
    <property type="method" value="NMR"/>
    <property type="chains" value="A=4337-4429"/>
</dbReference>
<dbReference type="PDB" id="2N56">
    <property type="method" value="NMR"/>
    <property type="chains" value="A=4430-4524"/>
</dbReference>
<dbReference type="PDB" id="2YZ8">
    <property type="method" value="X-ray"/>
    <property type="resolution" value="2.00 A"/>
    <property type="chains" value="A=3184-3273"/>
</dbReference>
<dbReference type="PDB" id="4C4K">
    <property type="method" value="X-ray"/>
    <property type="resolution" value="1.95 A"/>
    <property type="chains" value="O=9-103"/>
</dbReference>
<dbReference type="PDB" id="4RSV">
    <property type="method" value="X-ray"/>
    <property type="resolution" value="2.41 A"/>
    <property type="chains" value="A=4337-4429"/>
</dbReference>
<dbReference type="PDB" id="4UOW">
    <property type="method" value="X-ray"/>
    <property type="resolution" value="3.30 A"/>
    <property type="chains" value="0/2/4/6/8/A/C/E/G/I/K/M/O/Q/S/U/W/Y=110-203"/>
</dbReference>
<dbReference type="PDB" id="5TZM">
    <property type="method" value="X-ray"/>
    <property type="resolution" value="1.18 A"/>
    <property type="chains" value="A=4431-4521"/>
</dbReference>
<dbReference type="PDB" id="6MG9">
    <property type="method" value="NMR"/>
    <property type="chains" value="A=4247-4338"/>
</dbReference>
<dbReference type="PDB" id="7R67">
    <property type="method" value="NMR"/>
    <property type="chains" value="A=1161-1254"/>
</dbReference>
<dbReference type="PDB" id="7R68">
    <property type="method" value="NMR"/>
    <property type="chains" value="A=1071-1162"/>
</dbReference>
<dbReference type="PDBsum" id="1V1C"/>
<dbReference type="PDBsum" id="2CR6"/>
<dbReference type="PDBsum" id="2DKU"/>
<dbReference type="PDBsum" id="2DM7"/>
<dbReference type="PDBsum" id="2E7B"/>
<dbReference type="PDBsum" id="2EDF"/>
<dbReference type="PDBsum" id="2EDH"/>
<dbReference type="PDBsum" id="2EDL"/>
<dbReference type="PDBsum" id="2EDQ"/>
<dbReference type="PDBsum" id="2EDR"/>
<dbReference type="PDBsum" id="2EDT"/>
<dbReference type="PDBsum" id="2EDW"/>
<dbReference type="PDBsum" id="2ENY"/>
<dbReference type="PDBsum" id="2EO1"/>
<dbReference type="PDBsum" id="2GQH"/>
<dbReference type="PDBsum" id="2MWC"/>
<dbReference type="PDBsum" id="2N56"/>
<dbReference type="PDBsum" id="2YZ8"/>
<dbReference type="PDBsum" id="4C4K"/>
<dbReference type="PDBsum" id="4RSV"/>
<dbReference type="PDBsum" id="4UOW"/>
<dbReference type="PDBsum" id="5TZM"/>
<dbReference type="PDBsum" id="6MG9"/>
<dbReference type="PDBsum" id="7R67"/>
<dbReference type="PDBsum" id="7R68"/>
<dbReference type="SASBDB" id="Q5VST9"/>
<dbReference type="BioGRID" id="123847">
    <property type="interactions" value="72"/>
</dbReference>
<dbReference type="DIP" id="DIP-35727N"/>
<dbReference type="FunCoup" id="Q5VST9">
    <property type="interactions" value="489"/>
</dbReference>
<dbReference type="IntAct" id="Q5VST9">
    <property type="interactions" value="49"/>
</dbReference>
<dbReference type="MINT" id="Q5VST9"/>
<dbReference type="STRING" id="9606.ENSP00000455507"/>
<dbReference type="GlyCosmos" id="Q5VST9">
    <property type="glycosylation" value="1 site, 1 glycan"/>
</dbReference>
<dbReference type="GlyGen" id="Q5VST9">
    <property type="glycosylation" value="10 sites, 1 O-linked glycan (8 sites)"/>
</dbReference>
<dbReference type="iPTMnet" id="Q5VST9"/>
<dbReference type="MetOSite" id="Q5VST9"/>
<dbReference type="PhosphoSitePlus" id="Q5VST9"/>
<dbReference type="SwissPalm" id="Q5VST9"/>
<dbReference type="BioMuta" id="OBSCN"/>
<dbReference type="DMDM" id="215274225"/>
<dbReference type="jPOST" id="Q5VST9"/>
<dbReference type="MassIVE" id="Q5VST9"/>
<dbReference type="PeptideAtlas" id="Q5VST9"/>
<dbReference type="ProteomicsDB" id="65280">
    <molecule id="Q5VST9-1"/>
</dbReference>
<dbReference type="ProteomicsDB" id="65281">
    <molecule id="Q5VST9-2"/>
</dbReference>
<dbReference type="ProteomicsDB" id="65282">
    <molecule id="Q5VST9-3"/>
</dbReference>
<dbReference type="ProteomicsDB" id="65284">
    <molecule id="Q5VST9-6"/>
</dbReference>
<dbReference type="Pumba" id="Q5VST9"/>
<dbReference type="Antibodypedia" id="11615">
    <property type="antibodies" value="36 antibodies from 16 providers"/>
</dbReference>
<dbReference type="DNASU" id="84033"/>
<dbReference type="Ensembl" id="ENST00000680850.1">
    <molecule id="Q5VST9-7"/>
    <property type="protein sequence ID" value="ENSP00000505517.1"/>
    <property type="gene ID" value="ENSG00000154358.23"/>
</dbReference>
<dbReference type="KEGG" id="hsa:84033"/>
<dbReference type="MANE-Select" id="ENST00000680850.1">
    <molecule id="Q5VST9-7"/>
    <property type="protein sequence ID" value="ENSP00000505517.1"/>
    <property type="RefSeq nucleotide sequence ID" value="NM_001386125.1"/>
    <property type="RefSeq protein sequence ID" value="NP_001373054.1"/>
</dbReference>
<dbReference type="UCSC" id="uc001hsn.4">
    <molecule id="Q5VST9-1"/>
    <property type="organism name" value="human"/>
</dbReference>
<dbReference type="AGR" id="HGNC:15719"/>
<dbReference type="CTD" id="84033"/>
<dbReference type="DisGeNET" id="84033"/>
<dbReference type="GeneCards" id="OBSCN"/>
<dbReference type="HGNC" id="HGNC:15719">
    <property type="gene designation" value="OBSCN"/>
</dbReference>
<dbReference type="HPA" id="ENSG00000154358">
    <property type="expression patterns" value="Tissue enriched (skeletal)"/>
</dbReference>
<dbReference type="MalaCards" id="OBSCN"/>
<dbReference type="MIM" id="608616">
    <property type="type" value="gene"/>
</dbReference>
<dbReference type="MIM" id="620235">
    <property type="type" value="phenotype"/>
</dbReference>
<dbReference type="neXtProt" id="NX_Q5VST9"/>
<dbReference type="OpenTargets" id="ENSG00000154358"/>
<dbReference type="Orphanet" id="99845">
    <property type="disease" value="Genetic recurrent myoglobinuria"/>
</dbReference>
<dbReference type="PharmGKB" id="PA31888"/>
<dbReference type="VEuPathDB" id="HostDB:ENSG00000154358"/>
<dbReference type="GeneTree" id="ENSGT00940000154756"/>
<dbReference type="HOGENOM" id="CLU_000031_0_0_1"/>
<dbReference type="InParanoid" id="Q5VST9"/>
<dbReference type="OrthoDB" id="10072266at2759"/>
<dbReference type="PAN-GO" id="Q5VST9">
    <property type="GO annotations" value="4 GO annotations based on evolutionary models"/>
</dbReference>
<dbReference type="PhylomeDB" id="Q5VST9"/>
<dbReference type="PathwayCommons" id="Q5VST9"/>
<dbReference type="Reactome" id="R-HSA-193648">
    <property type="pathway name" value="NRAGE signals death through JNK"/>
</dbReference>
<dbReference type="Reactome" id="R-HSA-416482">
    <property type="pathway name" value="G alpha (12/13) signalling events"/>
</dbReference>
<dbReference type="Reactome" id="R-HSA-8980692">
    <property type="pathway name" value="RHOA GTPase cycle"/>
</dbReference>
<dbReference type="Reactome" id="R-HSA-9013406">
    <property type="pathway name" value="RHOQ GTPase cycle"/>
</dbReference>
<dbReference type="SignaLink" id="Q5VST9"/>
<dbReference type="SIGNOR" id="Q5VST9"/>
<dbReference type="BioGRID-ORCS" id="84033">
    <property type="hits" value="14 hits in 1186 CRISPR screens"/>
</dbReference>
<dbReference type="ChiTaRS" id="OBSCN">
    <property type="organism name" value="human"/>
</dbReference>
<dbReference type="EvolutionaryTrace" id="Q5VST9"/>
<dbReference type="GeneWiki" id="OBSCN"/>
<dbReference type="GeneWiki" id="Obscurin"/>
<dbReference type="GenomeRNAi" id="84033"/>
<dbReference type="Pharos" id="Q5VST9">
    <property type="development level" value="Tbio"/>
</dbReference>
<dbReference type="PRO" id="PR:Q5VST9"/>
<dbReference type="Proteomes" id="UP000005640">
    <property type="component" value="Chromosome 1"/>
</dbReference>
<dbReference type="RNAct" id="Q5VST9">
    <property type="molecule type" value="protein"/>
</dbReference>
<dbReference type="Bgee" id="ENSG00000154358">
    <property type="expression patterns" value="Expressed in hindlimb stylopod muscle and 120 other cell types or tissues"/>
</dbReference>
<dbReference type="ExpressionAtlas" id="Q5VST9">
    <property type="expression patterns" value="baseline and differential"/>
</dbReference>
<dbReference type="GO" id="GO:0005829">
    <property type="term" value="C:cytosol"/>
    <property type="evidence" value="ECO:0000314"/>
    <property type="project" value="HPA"/>
</dbReference>
<dbReference type="GO" id="GO:0031430">
    <property type="term" value="C:M band"/>
    <property type="evidence" value="ECO:0000250"/>
    <property type="project" value="BHF-UCL"/>
</dbReference>
<dbReference type="GO" id="GO:0030016">
    <property type="term" value="C:myofibril"/>
    <property type="evidence" value="ECO:0000303"/>
    <property type="project" value="BHF-UCL"/>
</dbReference>
<dbReference type="GO" id="GO:0016604">
    <property type="term" value="C:nuclear body"/>
    <property type="evidence" value="ECO:0000314"/>
    <property type="project" value="HPA"/>
</dbReference>
<dbReference type="GO" id="GO:0005886">
    <property type="term" value="C:plasma membrane"/>
    <property type="evidence" value="ECO:0000314"/>
    <property type="project" value="HPA"/>
</dbReference>
<dbReference type="GO" id="GO:0042383">
    <property type="term" value="C:sarcolemma"/>
    <property type="evidence" value="ECO:0007669"/>
    <property type="project" value="UniProtKB-SubCell"/>
</dbReference>
<dbReference type="GO" id="GO:0030018">
    <property type="term" value="C:Z disc"/>
    <property type="evidence" value="ECO:0000250"/>
    <property type="project" value="BHF-UCL"/>
</dbReference>
<dbReference type="GO" id="GO:0030506">
    <property type="term" value="F:ankyrin binding"/>
    <property type="evidence" value="ECO:0000353"/>
    <property type="project" value="BHF-UCL"/>
</dbReference>
<dbReference type="GO" id="GO:0005524">
    <property type="term" value="F:ATP binding"/>
    <property type="evidence" value="ECO:0007669"/>
    <property type="project" value="UniProtKB-KW"/>
</dbReference>
<dbReference type="GO" id="GO:0005516">
    <property type="term" value="F:calmodulin binding"/>
    <property type="evidence" value="ECO:0007669"/>
    <property type="project" value="UniProtKB-KW"/>
</dbReference>
<dbReference type="GO" id="GO:0005085">
    <property type="term" value="F:guanyl-nucleotide exchange factor activity"/>
    <property type="evidence" value="ECO:0000304"/>
    <property type="project" value="Reactome"/>
</dbReference>
<dbReference type="GO" id="GO:0046872">
    <property type="term" value="F:metal ion binding"/>
    <property type="evidence" value="ECO:0007669"/>
    <property type="project" value="UniProtKB-KW"/>
</dbReference>
<dbReference type="GO" id="GO:0005547">
    <property type="term" value="F:phosphatidylinositol-3,4,5-trisphosphate binding"/>
    <property type="evidence" value="ECO:0000314"/>
    <property type="project" value="UniProtKB"/>
</dbReference>
<dbReference type="GO" id="GO:0043325">
    <property type="term" value="F:phosphatidylinositol-3,4-bisphosphate binding"/>
    <property type="evidence" value="ECO:0000314"/>
    <property type="project" value="UniProtKB"/>
</dbReference>
<dbReference type="GO" id="GO:0032266">
    <property type="term" value="F:phosphatidylinositol-3-phosphate binding"/>
    <property type="evidence" value="ECO:0000314"/>
    <property type="project" value="UniProtKB"/>
</dbReference>
<dbReference type="GO" id="GO:0005546">
    <property type="term" value="F:phosphatidylinositol-4,5-bisphosphate binding"/>
    <property type="evidence" value="ECO:0000314"/>
    <property type="project" value="UniProtKB"/>
</dbReference>
<dbReference type="GO" id="GO:0070273">
    <property type="term" value="F:phosphatidylinositol-4-phosphate binding"/>
    <property type="evidence" value="ECO:0000314"/>
    <property type="project" value="UniProtKB"/>
</dbReference>
<dbReference type="GO" id="GO:0010314">
    <property type="term" value="F:phosphatidylinositol-5-phosphate binding"/>
    <property type="evidence" value="ECO:0000314"/>
    <property type="project" value="UniProtKB"/>
</dbReference>
<dbReference type="GO" id="GO:0106310">
    <property type="term" value="F:protein serine kinase activity"/>
    <property type="evidence" value="ECO:0007669"/>
    <property type="project" value="RHEA"/>
</dbReference>
<dbReference type="GO" id="GO:0004674">
    <property type="term" value="F:protein serine/threonine kinase activity"/>
    <property type="evidence" value="ECO:0007669"/>
    <property type="project" value="UniProtKB-KW"/>
</dbReference>
<dbReference type="GO" id="GO:0008307">
    <property type="term" value="F:structural constituent of muscle"/>
    <property type="evidence" value="ECO:0000303"/>
    <property type="project" value="BHF-UCL"/>
</dbReference>
<dbReference type="GO" id="GO:0031432">
    <property type="term" value="F:titin binding"/>
    <property type="evidence" value="ECO:0000353"/>
    <property type="project" value="BHF-UCL"/>
</dbReference>
<dbReference type="GO" id="GO:0036309">
    <property type="term" value="P:protein localization to M-band"/>
    <property type="evidence" value="ECO:0000250"/>
    <property type="project" value="BHF-UCL"/>
</dbReference>
<dbReference type="GO" id="GO:0051056">
    <property type="term" value="P:regulation of small GTPase mediated signal transduction"/>
    <property type="evidence" value="ECO:0000304"/>
    <property type="project" value="Reactome"/>
</dbReference>
<dbReference type="GO" id="GO:0045214">
    <property type="term" value="P:sarcomere organization"/>
    <property type="evidence" value="ECO:0000304"/>
    <property type="project" value="BHF-UCL"/>
</dbReference>
<dbReference type="CDD" id="cd00063">
    <property type="entry name" value="FN3"/>
    <property type="match status" value="2"/>
</dbReference>
<dbReference type="CDD" id="cd00096">
    <property type="entry name" value="Ig"/>
    <property type="match status" value="4"/>
</dbReference>
<dbReference type="CDD" id="cd20971">
    <property type="entry name" value="IgI_1_Titin-A168_like"/>
    <property type="match status" value="1"/>
</dbReference>
<dbReference type="CDD" id="cd20967">
    <property type="entry name" value="IgI_C2_MyBP-C-like"/>
    <property type="match status" value="1"/>
</dbReference>
<dbReference type="CDD" id="cd23767">
    <property type="entry name" value="IQCD"/>
    <property type="match status" value="1"/>
</dbReference>
<dbReference type="CDD" id="cd13239">
    <property type="entry name" value="PH_Obscurin"/>
    <property type="match status" value="1"/>
</dbReference>
<dbReference type="CDD" id="cd12025">
    <property type="entry name" value="SH3_Obscurin_like"/>
    <property type="match status" value="1"/>
</dbReference>
<dbReference type="CDD" id="cd14107">
    <property type="entry name" value="STKc_obscurin_rpt1"/>
    <property type="match status" value="1"/>
</dbReference>
<dbReference type="CDD" id="cd14110">
    <property type="entry name" value="STKc_obscurin_rpt2"/>
    <property type="match status" value="1"/>
</dbReference>
<dbReference type="FunFam" id="2.60.40.10:FF:000421">
    <property type="entry name" value="LOW QUALITY PROTEIN: obscurin"/>
    <property type="match status" value="2"/>
</dbReference>
<dbReference type="FunFam" id="3.30.200.20:FF:000501">
    <property type="entry name" value="Obscurin isoform B"/>
    <property type="match status" value="1"/>
</dbReference>
<dbReference type="FunFam" id="1.10.510.10:FF:000912">
    <property type="entry name" value="obscurin isoform X1"/>
    <property type="match status" value="1"/>
</dbReference>
<dbReference type="FunFam" id="2.60.40.10:FF:000665">
    <property type="entry name" value="obscurin isoform X1"/>
    <property type="match status" value="1"/>
</dbReference>
<dbReference type="FunFam" id="2.30.30.40:FF:000124">
    <property type="entry name" value="obscurin isoform X2"/>
    <property type="match status" value="1"/>
</dbReference>
<dbReference type="FunFam" id="2.60.40.10:FF:000380">
    <property type="entry name" value="obscurin isoform X3"/>
    <property type="match status" value="1"/>
</dbReference>
<dbReference type="FunFam" id="2.60.40.10:FF:000599">
    <property type="entry name" value="obscurin isoform X3"/>
    <property type="match status" value="1"/>
</dbReference>
<dbReference type="FunFam" id="2.60.40.10:FF:000652">
    <property type="entry name" value="obscurin isoform X3"/>
    <property type="match status" value="1"/>
</dbReference>
<dbReference type="FunFam" id="2.60.40.10:FF:000988">
    <property type="entry name" value="obscurin isoform X3"/>
    <property type="match status" value="1"/>
</dbReference>
<dbReference type="FunFam" id="2.60.40.10:FF:000228">
    <property type="entry name" value="obscurin isoform X4"/>
    <property type="match status" value="4"/>
</dbReference>
<dbReference type="FunFam" id="2.60.40.10:FF:000523">
    <property type="entry name" value="obscurin isoform X4"/>
    <property type="match status" value="1"/>
</dbReference>
<dbReference type="FunFam" id="2.60.40.10:FF:000773">
    <property type="entry name" value="obscurin isoform X4"/>
    <property type="match status" value="1"/>
</dbReference>
<dbReference type="FunFam" id="2.60.40.10:FF:000841">
    <property type="entry name" value="obscurin isoform X4"/>
    <property type="match status" value="1"/>
</dbReference>
<dbReference type="FunFam" id="2.60.40.10:FF:001071">
    <property type="entry name" value="obscurin isoform X4"/>
    <property type="match status" value="1"/>
</dbReference>
<dbReference type="FunFam" id="2.30.29.30:FF:000197">
    <property type="entry name" value="obscurin isoform X5"/>
    <property type="match status" value="1"/>
</dbReference>
<dbReference type="FunFam" id="2.60.40.10:FF:000109">
    <property type="entry name" value="obscurin isoform X5"/>
    <property type="match status" value="6"/>
</dbReference>
<dbReference type="FunFam" id="3.30.200.20:FF:000424">
    <property type="entry name" value="obscurin isoform X5"/>
    <property type="match status" value="1"/>
</dbReference>
<dbReference type="FunFam" id="2.60.40.10:FF:000747">
    <property type="entry name" value="obscurin isoform X6"/>
    <property type="match status" value="1"/>
</dbReference>
<dbReference type="FunFam" id="2.60.40.10:FF:000903">
    <property type="entry name" value="obscurin isoform X6"/>
    <property type="match status" value="1"/>
</dbReference>
<dbReference type="FunFam" id="1.10.510.10:FF:000519">
    <property type="entry name" value="Obscurin, cytoskeletal calmodulin and titin-interacting RhoGEF"/>
    <property type="match status" value="1"/>
</dbReference>
<dbReference type="FunFam" id="1.20.900.10:FF:000027">
    <property type="entry name" value="Obscurin, cytoskeletal calmodulin and titin-interacting RhoGEF"/>
    <property type="match status" value="1"/>
</dbReference>
<dbReference type="FunFam" id="2.60.40.10:FF:000075">
    <property type="entry name" value="Obscurin, cytoskeletal calmodulin and titin-interacting RhoGEF"/>
    <property type="match status" value="9"/>
</dbReference>
<dbReference type="FunFam" id="2.60.40.10:FF:000707">
    <property type="entry name" value="Obscurin, cytoskeletal calmodulin and titin-interacting RhoGEF"/>
    <property type="match status" value="1"/>
</dbReference>
<dbReference type="FunFam" id="2.60.40.10:FF:000771">
    <property type="entry name" value="Obscurin, cytoskeletal calmodulin and titin-interacting RhoGEF"/>
    <property type="match status" value="1"/>
</dbReference>
<dbReference type="FunFam" id="2.60.40.10:FF:000837">
    <property type="entry name" value="Obscurin, cytoskeletal calmodulin and titin-interacting RhoGEF"/>
    <property type="match status" value="1"/>
</dbReference>
<dbReference type="FunFam" id="2.60.40.10:FF:000866">
    <property type="entry name" value="Obscurin, cytoskeletal calmodulin and titin-interacting RhoGEF"/>
    <property type="match status" value="1"/>
</dbReference>
<dbReference type="FunFam" id="2.60.40.10:FF:000872">
    <property type="entry name" value="Obscurin, cytoskeletal calmodulin and titin-interacting RhoGEF"/>
    <property type="match status" value="1"/>
</dbReference>
<dbReference type="FunFam" id="2.60.40.10:FF:000881">
    <property type="entry name" value="Obscurin, cytoskeletal calmodulin and titin-interacting RhoGEF"/>
    <property type="match status" value="1"/>
</dbReference>
<dbReference type="FunFam" id="2.60.40.10:FF:000898">
    <property type="entry name" value="Obscurin, cytoskeletal calmodulin and titin-interacting RhoGEF"/>
    <property type="match status" value="1"/>
</dbReference>
<dbReference type="FunFam" id="2.60.40.10:FF:000917">
    <property type="entry name" value="Obscurin, cytoskeletal calmodulin and titin-interacting RhoGEF"/>
    <property type="match status" value="1"/>
</dbReference>
<dbReference type="FunFam" id="2.60.40.10:FF:000954">
    <property type="entry name" value="Obscurin, cytoskeletal calmodulin and titin-interacting RhoGEF"/>
    <property type="match status" value="1"/>
</dbReference>
<dbReference type="FunFam" id="2.60.40.10:FF:000965">
    <property type="entry name" value="Obscurin, cytoskeletal calmodulin and titin-interacting RhoGEF"/>
    <property type="match status" value="1"/>
</dbReference>
<dbReference type="FunFam" id="2.60.40.10:FF:000979">
    <property type="entry name" value="Obscurin, cytoskeletal calmodulin and titin-interacting RhoGEF"/>
    <property type="match status" value="1"/>
</dbReference>
<dbReference type="FunFam" id="2.60.40.10:FF:000989">
    <property type="entry name" value="Obscurin, cytoskeletal calmodulin and titin-interacting RhoGEF"/>
    <property type="match status" value="1"/>
</dbReference>
<dbReference type="FunFam" id="2.60.40.10:FF:001032">
    <property type="entry name" value="Obscurin, cytoskeletal calmodulin and titin-interacting RhoGEF"/>
    <property type="match status" value="1"/>
</dbReference>
<dbReference type="FunFam" id="2.60.40.10:FF:001054">
    <property type="entry name" value="Obscurin, cytoskeletal calmodulin and titin-interacting RhoGEF"/>
    <property type="match status" value="1"/>
</dbReference>
<dbReference type="FunFam" id="2.60.40.10:FF:001055">
    <property type="entry name" value="Obscurin, cytoskeletal calmodulin and titin-interacting RhoGEF"/>
    <property type="match status" value="1"/>
</dbReference>
<dbReference type="FunFam" id="2.60.40.10:FF:001103">
    <property type="entry name" value="Obscurin, cytoskeletal calmodulin and titin-interacting RhoGEF"/>
    <property type="match status" value="1"/>
</dbReference>
<dbReference type="FunFam" id="2.60.40.10:FF:001136">
    <property type="entry name" value="Obscurin, cytoskeletal calmodulin and titin-interacting RhoGEF"/>
    <property type="match status" value="1"/>
</dbReference>
<dbReference type="FunFam" id="2.60.40.10:FF:001174">
    <property type="entry name" value="Obscurin, cytoskeletal calmodulin and titin-interacting RhoGEF"/>
    <property type="match status" value="1"/>
</dbReference>
<dbReference type="FunFam" id="2.60.40.10:FF:001212">
    <property type="entry name" value="Obscurin, cytoskeletal calmodulin and titin-interacting RhoGEF"/>
    <property type="match status" value="1"/>
</dbReference>
<dbReference type="FunFam" id="2.60.40.10:FF:001214">
    <property type="entry name" value="Obscurin, cytoskeletal calmodulin and titin-interacting RhoGEF"/>
    <property type="match status" value="1"/>
</dbReference>
<dbReference type="FunFam" id="2.60.40.10:FF:001295">
    <property type="entry name" value="Obscurin, cytoskeletal calmodulin and titin-interacting RhoGEF"/>
    <property type="match status" value="1"/>
</dbReference>
<dbReference type="FunFam" id="2.60.40.10:FF:001314">
    <property type="entry name" value="Obscurin, cytoskeletal calmodulin and titin-interacting RhoGEF"/>
    <property type="match status" value="1"/>
</dbReference>
<dbReference type="FunFam" id="2.60.40.10:FF:000050">
    <property type="entry name" value="Titin isoform B"/>
    <property type="match status" value="3"/>
</dbReference>
<dbReference type="FunFam" id="2.60.40.10:FF:000148">
    <property type="entry name" value="titin isoform X1"/>
    <property type="match status" value="2"/>
</dbReference>
<dbReference type="Gene3D" id="1.20.900.10">
    <property type="entry name" value="Dbl homology (DH) domain"/>
    <property type="match status" value="1"/>
</dbReference>
<dbReference type="Gene3D" id="2.60.40.10">
    <property type="entry name" value="Immunoglobulins"/>
    <property type="match status" value="61"/>
</dbReference>
<dbReference type="Gene3D" id="3.30.200.20">
    <property type="entry name" value="Phosphorylase Kinase, domain 1"/>
    <property type="match status" value="1"/>
</dbReference>
<dbReference type="Gene3D" id="2.30.29.30">
    <property type="entry name" value="Pleckstrin-homology domain (PH domain)/Phosphotyrosine-binding domain (PTB)"/>
    <property type="match status" value="1"/>
</dbReference>
<dbReference type="Gene3D" id="2.30.30.40">
    <property type="entry name" value="SH3 Domains"/>
    <property type="match status" value="1"/>
</dbReference>
<dbReference type="Gene3D" id="1.10.510.10">
    <property type="entry name" value="Transferase(Phosphotransferase) domain 1"/>
    <property type="match status" value="2"/>
</dbReference>
<dbReference type="InterPro" id="IPR035899">
    <property type="entry name" value="DBL_dom_sf"/>
</dbReference>
<dbReference type="InterPro" id="IPR000219">
    <property type="entry name" value="DH_dom"/>
</dbReference>
<dbReference type="InterPro" id="IPR003961">
    <property type="entry name" value="FN3_dom"/>
</dbReference>
<dbReference type="InterPro" id="IPR036116">
    <property type="entry name" value="FN3_sf"/>
</dbReference>
<dbReference type="InterPro" id="IPR007110">
    <property type="entry name" value="Ig-like_dom"/>
</dbReference>
<dbReference type="InterPro" id="IPR036179">
    <property type="entry name" value="Ig-like_dom_sf"/>
</dbReference>
<dbReference type="InterPro" id="IPR013783">
    <property type="entry name" value="Ig-like_fold"/>
</dbReference>
<dbReference type="InterPro" id="IPR013098">
    <property type="entry name" value="Ig_I-set"/>
</dbReference>
<dbReference type="InterPro" id="IPR003599">
    <property type="entry name" value="Ig_sub"/>
</dbReference>
<dbReference type="InterPro" id="IPR003598">
    <property type="entry name" value="Ig_sub2"/>
</dbReference>
<dbReference type="InterPro" id="IPR013106">
    <property type="entry name" value="Ig_V-set"/>
</dbReference>
<dbReference type="InterPro" id="IPR000048">
    <property type="entry name" value="IQ_motif_EF-hand-BS"/>
</dbReference>
<dbReference type="InterPro" id="IPR011009">
    <property type="entry name" value="Kinase-like_dom_sf"/>
</dbReference>
<dbReference type="InterPro" id="IPR052385">
    <property type="entry name" value="Obscurin/Obscurin-like_Reg"/>
</dbReference>
<dbReference type="InterPro" id="IPR035526">
    <property type="entry name" value="Obscurin_SH3"/>
</dbReference>
<dbReference type="InterPro" id="IPR011993">
    <property type="entry name" value="PH-like_dom_sf"/>
</dbReference>
<dbReference type="InterPro" id="IPR001849">
    <property type="entry name" value="PH_domain"/>
</dbReference>
<dbReference type="InterPro" id="IPR000719">
    <property type="entry name" value="Prot_kinase_dom"/>
</dbReference>
<dbReference type="InterPro" id="IPR017441">
    <property type="entry name" value="Protein_kinase_ATP_BS"/>
</dbReference>
<dbReference type="InterPro" id="IPR008271">
    <property type="entry name" value="Ser/Thr_kinase_AS"/>
</dbReference>
<dbReference type="InterPro" id="IPR036028">
    <property type="entry name" value="SH3-like_dom_sf"/>
</dbReference>
<dbReference type="InterPro" id="IPR001452">
    <property type="entry name" value="SH3_domain"/>
</dbReference>
<dbReference type="InterPro" id="IPR055251">
    <property type="entry name" value="SOS1_NGEF_PH"/>
</dbReference>
<dbReference type="InterPro" id="IPR008266">
    <property type="entry name" value="Tyr_kinase_AS"/>
</dbReference>
<dbReference type="PANTHER" id="PTHR35971:SF4">
    <property type="entry name" value="OBSCURIN"/>
    <property type="match status" value="1"/>
</dbReference>
<dbReference type="PANTHER" id="PTHR35971">
    <property type="entry name" value="SI:DKEY-31G6.6"/>
    <property type="match status" value="1"/>
</dbReference>
<dbReference type="Pfam" id="PF00041">
    <property type="entry name" value="fn3"/>
    <property type="match status" value="1"/>
</dbReference>
<dbReference type="Pfam" id="PF07679">
    <property type="entry name" value="I-set"/>
    <property type="match status" value="51"/>
</dbReference>
<dbReference type="Pfam" id="PF00612">
    <property type="entry name" value="IQ"/>
    <property type="match status" value="1"/>
</dbReference>
<dbReference type="Pfam" id="PF00069">
    <property type="entry name" value="Pkinase"/>
    <property type="match status" value="2"/>
</dbReference>
<dbReference type="Pfam" id="PF00621">
    <property type="entry name" value="RhoGEF"/>
    <property type="match status" value="1"/>
</dbReference>
<dbReference type="Pfam" id="PF22697">
    <property type="entry name" value="SOS1_NGEF_PH"/>
    <property type="match status" value="1"/>
</dbReference>
<dbReference type="SMART" id="SM00060">
    <property type="entry name" value="FN3"/>
    <property type="match status" value="3"/>
</dbReference>
<dbReference type="SMART" id="SM00409">
    <property type="entry name" value="IG"/>
    <property type="match status" value="56"/>
</dbReference>
<dbReference type="SMART" id="SM00408">
    <property type="entry name" value="IGc2"/>
    <property type="match status" value="49"/>
</dbReference>
<dbReference type="SMART" id="SM00406">
    <property type="entry name" value="IGv"/>
    <property type="match status" value="14"/>
</dbReference>
<dbReference type="SMART" id="SM00015">
    <property type="entry name" value="IQ"/>
    <property type="match status" value="1"/>
</dbReference>
<dbReference type="SMART" id="SM00233">
    <property type="entry name" value="PH"/>
    <property type="match status" value="1"/>
</dbReference>
<dbReference type="SMART" id="SM00325">
    <property type="entry name" value="RhoGEF"/>
    <property type="match status" value="1"/>
</dbReference>
<dbReference type="SMART" id="SM00220">
    <property type="entry name" value="S_TKc"/>
    <property type="match status" value="2"/>
</dbReference>
<dbReference type="SUPFAM" id="SSF48065">
    <property type="entry name" value="DBL homology domain (DH-domain)"/>
    <property type="match status" value="1"/>
</dbReference>
<dbReference type="SUPFAM" id="SSF49265">
    <property type="entry name" value="Fibronectin type III"/>
    <property type="match status" value="3"/>
</dbReference>
<dbReference type="SUPFAM" id="SSF48726">
    <property type="entry name" value="Immunoglobulin"/>
    <property type="match status" value="57"/>
</dbReference>
<dbReference type="SUPFAM" id="SSF50729">
    <property type="entry name" value="PH domain-like"/>
    <property type="match status" value="1"/>
</dbReference>
<dbReference type="SUPFAM" id="SSF56112">
    <property type="entry name" value="Protein kinase-like (PK-like)"/>
    <property type="match status" value="2"/>
</dbReference>
<dbReference type="SUPFAM" id="SSF50044">
    <property type="entry name" value="SH3-domain"/>
    <property type="match status" value="1"/>
</dbReference>
<dbReference type="PROSITE" id="PS50010">
    <property type="entry name" value="DH_2"/>
    <property type="match status" value="1"/>
</dbReference>
<dbReference type="PROSITE" id="PS50853">
    <property type="entry name" value="FN3"/>
    <property type="match status" value="3"/>
</dbReference>
<dbReference type="PROSITE" id="PS50835">
    <property type="entry name" value="IG_LIKE"/>
    <property type="match status" value="47"/>
</dbReference>
<dbReference type="PROSITE" id="PS50096">
    <property type="entry name" value="IQ"/>
    <property type="match status" value="1"/>
</dbReference>
<dbReference type="PROSITE" id="PS50003">
    <property type="entry name" value="PH_DOMAIN"/>
    <property type="match status" value="1"/>
</dbReference>
<dbReference type="PROSITE" id="PS00107">
    <property type="entry name" value="PROTEIN_KINASE_ATP"/>
    <property type="match status" value="1"/>
</dbReference>
<dbReference type="PROSITE" id="PS50011">
    <property type="entry name" value="PROTEIN_KINASE_DOM"/>
    <property type="match status" value="2"/>
</dbReference>
<dbReference type="PROSITE" id="PS00108">
    <property type="entry name" value="PROTEIN_KINASE_ST"/>
    <property type="match status" value="1"/>
</dbReference>
<dbReference type="PROSITE" id="PS00109">
    <property type="entry name" value="PROTEIN_KINASE_TYR"/>
    <property type="match status" value="1"/>
</dbReference>
<dbReference type="PROSITE" id="PS50002">
    <property type="entry name" value="SH3"/>
    <property type="match status" value="1"/>
</dbReference>